<reference evidence="23" key="1">
    <citation type="journal article" date="1999" name="Hum. Mol. Genet.">
        <title>The ancestral gene for transcribed, low-copy repeats in the Prader-Willi/Angelman region encodes a large protein implicated in protein trafficking, which is deficient in mice with neuromuscular and spermiogenic abnormalities.</title>
        <authorList>
            <person name="Ji Y."/>
            <person name="Walkowicz M.J."/>
            <person name="Buiting K."/>
            <person name="Johnson D.K."/>
            <person name="Tarvin R.E."/>
            <person name="Rinchik E.M."/>
            <person name="Horsthemke B."/>
            <person name="Stubbs L."/>
            <person name="Nicholls R.D."/>
        </authorList>
    </citation>
    <scope>NUCLEOTIDE SEQUENCE [MRNA]</scope>
</reference>
<reference key="2">
    <citation type="journal article" date="2006" name="Nature">
        <title>Analysis of the DNA sequence and duplication history of human chromosome 15.</title>
        <authorList>
            <person name="Zody M.C."/>
            <person name="Garber M."/>
            <person name="Sharpe T."/>
            <person name="Young S.K."/>
            <person name="Rowen L."/>
            <person name="O'Neill K."/>
            <person name="Whittaker C.A."/>
            <person name="Kamal M."/>
            <person name="Chang J.L."/>
            <person name="Cuomo C.A."/>
            <person name="Dewar K."/>
            <person name="FitzGerald M.G."/>
            <person name="Kodira C.D."/>
            <person name="Madan A."/>
            <person name="Qin S."/>
            <person name="Yang X."/>
            <person name="Abbasi N."/>
            <person name="Abouelleil A."/>
            <person name="Arachchi H.M."/>
            <person name="Baradarani L."/>
            <person name="Birditt B."/>
            <person name="Bloom S."/>
            <person name="Bloom T."/>
            <person name="Borowsky M.L."/>
            <person name="Burke J."/>
            <person name="Butler J."/>
            <person name="Cook A."/>
            <person name="DeArellano K."/>
            <person name="DeCaprio D."/>
            <person name="Dorris L. III"/>
            <person name="Dors M."/>
            <person name="Eichler E.E."/>
            <person name="Engels R."/>
            <person name="Fahey J."/>
            <person name="Fleetwood P."/>
            <person name="Friedman C."/>
            <person name="Gearin G."/>
            <person name="Hall J.L."/>
            <person name="Hensley G."/>
            <person name="Johnson E."/>
            <person name="Jones C."/>
            <person name="Kamat A."/>
            <person name="Kaur A."/>
            <person name="Locke D.P."/>
            <person name="Madan A."/>
            <person name="Munson G."/>
            <person name="Jaffe D.B."/>
            <person name="Lui A."/>
            <person name="Macdonald P."/>
            <person name="Mauceli E."/>
            <person name="Naylor J.W."/>
            <person name="Nesbitt R."/>
            <person name="Nicol R."/>
            <person name="O'Leary S.B."/>
            <person name="Ratcliffe A."/>
            <person name="Rounsley S."/>
            <person name="She X."/>
            <person name="Sneddon K.M.B."/>
            <person name="Stewart S."/>
            <person name="Sougnez C."/>
            <person name="Stone S.M."/>
            <person name="Topham K."/>
            <person name="Vincent D."/>
            <person name="Wang S."/>
            <person name="Zimmer A.R."/>
            <person name="Birren B.W."/>
            <person name="Hood L."/>
            <person name="Lander E.S."/>
            <person name="Nusbaum C."/>
        </authorList>
    </citation>
    <scope>NUCLEOTIDE SEQUENCE [LARGE SCALE GENOMIC DNA]</scope>
</reference>
<reference evidence="22 24" key="3">
    <citation type="journal article" date="2000" name="Genome Res.">
        <title>Structure of the highly conserved HERC2 gene and of multiple partially duplicated paralogs in human.</title>
        <authorList>
            <person name="Ji Y."/>
            <person name="Rebert N.A."/>
            <person name="Joslin J.M."/>
            <person name="Higgins M.J."/>
            <person name="Schultz R.A."/>
            <person name="Nicholls R.D."/>
        </authorList>
    </citation>
    <scope>NUCLEOTIDE SEQUENCE [GENOMIC DNA] OF 2818-2895; 2909-2957; 2963-3290; 3317-3363; 3389-3430; 3458-3495; 3512-3527; 3533-3633; 3635-3821; 3826-4084; 4097-4505 AND 4529-4834</scope>
    <scope>GENE STRUCTURE</scope>
</reference>
<reference key="4">
    <citation type="journal article" date="2006" name="Cell">
        <title>Global, in vivo, and site-specific phosphorylation dynamics in signaling networks.</title>
        <authorList>
            <person name="Olsen J.V."/>
            <person name="Blagoev B."/>
            <person name="Gnad F."/>
            <person name="Macek B."/>
            <person name="Kumar C."/>
            <person name="Mortensen P."/>
            <person name="Mann M."/>
        </authorList>
    </citation>
    <scope>PHOSPHORYLATION [LARGE SCALE ANALYSIS] AT SER-2454 AND SER-2928</scope>
    <scope>IDENTIFICATION BY MASS SPECTROMETRY [LARGE SCALE ANALYSIS]</scope>
    <source>
        <tissue>Cervix carcinoma</tissue>
    </source>
</reference>
<reference key="5">
    <citation type="journal article" date="2008" name="Am. J. Hum. Genet.">
        <title>Three genome-wide association studies and a linkage analysis identify HERC2 as a human iris color gene.</title>
        <authorList>
            <person name="Kayser M."/>
            <person name="Liu F."/>
            <person name="Janssens A.C.J.W."/>
            <person name="Rivadeneira F."/>
            <person name="Lao O."/>
            <person name="van Duijn K."/>
            <person name="Vermeulen M."/>
            <person name="Arp P."/>
            <person name="Jhamai M.M."/>
            <person name="van Ijcken W.F.J."/>
            <person name="den Dunnen J.T."/>
            <person name="Heath S."/>
            <person name="Zelenika D."/>
            <person name="Despriet D.D.G."/>
            <person name="Klaver C.C.W."/>
            <person name="Vingerling J.R."/>
            <person name="de Jong P.T.V.M."/>
            <person name="Hofman A."/>
            <person name="Aulchenko Y.S."/>
            <person name="Uitterlinden A.G."/>
            <person name="Oostra B.A."/>
            <person name="van Duijn C.M."/>
        </authorList>
    </citation>
    <scope>INVOLVEMENT IN SHEP1</scope>
</reference>
<reference key="6">
    <citation type="journal article" date="2008" name="Am. J. Hum. Genet.">
        <title>A single SNP in an evolutionary conserved region within intron 86 of the HERC2 gene determines human blue-brown eye color.</title>
        <authorList>
            <person name="Sturm R.A."/>
            <person name="Duffy D.L."/>
            <person name="Zhao Z.Z."/>
            <person name="Leite F.P.M."/>
            <person name="Stark M.S."/>
            <person name="Hayward N.K."/>
            <person name="Martin N.G."/>
            <person name="Montgomery G.W."/>
        </authorList>
    </citation>
    <scope>INVOLVEMENT IN SHEP1</scope>
</reference>
<reference key="7">
    <citation type="journal article" date="2008" name="Hum. Genet.">
        <title>Blue eye color in humans may be caused by a perfectly associated founder mutation in a regulatory element located within the HERC2 gene inhibiting OCA2 expression.</title>
        <authorList>
            <person name="Eiberg H."/>
            <person name="Troelsen J."/>
            <person name="Nielsen M."/>
            <person name="Mikkelsen A."/>
            <person name="Mengel-From J."/>
            <person name="Kjaer K.W."/>
            <person name="Hansen L."/>
        </authorList>
    </citation>
    <scope>INVOLVEMENT IN SHEP1</scope>
    <scope>REGULATION OF OCA2</scope>
</reference>
<reference key="8">
    <citation type="journal article" date="2008" name="Proc. Natl. Acad. Sci. U.S.A.">
        <title>A quantitative atlas of mitotic phosphorylation.</title>
        <authorList>
            <person name="Dephoure N."/>
            <person name="Zhou C."/>
            <person name="Villen J."/>
            <person name="Beausoleil S.A."/>
            <person name="Bakalarski C.E."/>
            <person name="Elledge S.J."/>
            <person name="Gygi S.P."/>
        </authorList>
    </citation>
    <scope>PHOSPHORYLATION [LARGE SCALE ANALYSIS] AT SER-2928; SER-4810; SER-4811 AND SER-4814</scope>
    <scope>IDENTIFICATION BY MASS SPECTROMETRY [LARGE SCALE ANALYSIS]</scope>
    <source>
        <tissue>Cervix carcinoma</tissue>
    </source>
</reference>
<reference key="9">
    <citation type="journal article" date="2009" name="Anal. Chem.">
        <title>Lys-N and trypsin cover complementary parts of the phosphoproteome in a refined SCX-based approach.</title>
        <authorList>
            <person name="Gauci S."/>
            <person name="Helbig A.O."/>
            <person name="Slijper M."/>
            <person name="Krijgsveld J."/>
            <person name="Heck A.J."/>
            <person name="Mohammed S."/>
        </authorList>
    </citation>
    <scope>IDENTIFICATION BY MASS SPECTROMETRY [LARGE SCALE ANALYSIS]</scope>
</reference>
<reference key="10">
    <citation type="journal article" date="2009" name="Sci. Signal.">
        <title>Quantitative phosphoproteomic analysis of T cell receptor signaling reveals system-wide modulation of protein-protein interactions.</title>
        <authorList>
            <person name="Mayya V."/>
            <person name="Lundgren D.H."/>
            <person name="Hwang S.-I."/>
            <person name="Rezaul K."/>
            <person name="Wu L."/>
            <person name="Eng J.K."/>
            <person name="Rodionov V."/>
            <person name="Han D.K."/>
        </authorList>
    </citation>
    <scope>PHOSPHORYLATION [LARGE SCALE ANALYSIS] AT SER-2454</scope>
    <scope>IDENTIFICATION BY MASS SPECTROMETRY [LARGE SCALE ANALYSIS]</scope>
    <source>
        <tissue>Leukemic T-cell</tissue>
    </source>
</reference>
<reference key="11">
    <citation type="journal article" date="2010" name="Forensic Sci. Int. Genet.">
        <title>Human eye colour and HERC2, OCA2 and MATP.</title>
        <authorList>
            <person name="Mengel-From J."/>
            <person name="Borsting C."/>
            <person name="Sanchez J.J."/>
            <person name="Eiberg H."/>
            <person name="Morling N."/>
        </authorList>
    </citation>
    <scope>INVOLVEMENT IN SHEP1</scope>
</reference>
<reference key="12">
    <citation type="journal article" date="2010" name="Nat. Cell Biol.">
        <title>HERC2 coordinates ubiquitin-dependent assembly of DNA repair factors on damaged chromosomes.</title>
        <authorList>
            <person name="Bekker-Jensen S."/>
            <person name="Rendtlew Danielsen J."/>
            <person name="Fugger K."/>
            <person name="Gromova I."/>
            <person name="Nerstedt A."/>
            <person name="Lukas C."/>
            <person name="Bartek J."/>
            <person name="Lukas J."/>
            <person name="Mailand N."/>
        </authorList>
    </citation>
    <scope>FUNCTION</scope>
    <scope>INTERACTION WITH RNF8</scope>
    <scope>PHOSPHORYLATION AT THR-4827</scope>
    <scope>MUTAGENESIS OF THR-4827</scope>
    <scope>SUBCELLULAR LOCATION</scope>
</reference>
<reference key="13">
    <citation type="journal article" date="2010" name="Proc. Natl. Acad. Sci. U.S.A.">
        <title>Circadian control of XPA and excision repair of cisplatin-DNA damage by cryptochrome and HERC2 ubiquitin ligase.</title>
        <authorList>
            <person name="Kang T.H."/>
            <person name="Lindsey-Boltz L.A."/>
            <person name="Reardon J.T."/>
            <person name="Sancar A."/>
        </authorList>
    </citation>
    <scope>FUNCTION</scope>
    <scope>CATALYTIC ACTIVITY</scope>
    <scope>INTERACTION WITH XPA</scope>
    <scope>SUBCELLULAR LOCATION</scope>
</reference>
<reference key="14">
    <citation type="journal article" date="2010" name="Sci. Signal.">
        <title>Quantitative phosphoproteomics reveals widespread full phosphorylation site occupancy during mitosis.</title>
        <authorList>
            <person name="Olsen J.V."/>
            <person name="Vermeulen M."/>
            <person name="Santamaria A."/>
            <person name="Kumar C."/>
            <person name="Miller M.L."/>
            <person name="Jensen L.J."/>
            <person name="Gnad F."/>
            <person name="Cox J."/>
            <person name="Jensen T.S."/>
            <person name="Nigg E.A."/>
            <person name="Brunak S."/>
            <person name="Mann M."/>
        </authorList>
    </citation>
    <scope>PHOSPHORYLATION [LARGE SCALE ANALYSIS] AT SER-2454 AND SER-2928</scope>
    <scope>IDENTIFICATION BY MASS SPECTROMETRY [LARGE SCALE ANALYSIS]</scope>
    <source>
        <tissue>Cervix carcinoma</tissue>
    </source>
</reference>
<reference key="15">
    <citation type="journal article" date="2011" name="BMC Syst. Biol.">
        <title>Initial characterization of the human central proteome.</title>
        <authorList>
            <person name="Burkard T.R."/>
            <person name="Planyavsky M."/>
            <person name="Kaupe I."/>
            <person name="Breitwieser F.P."/>
            <person name="Buerckstuemmer T."/>
            <person name="Bennett K.L."/>
            <person name="Superti-Furga G."/>
            <person name="Colinge J."/>
        </authorList>
    </citation>
    <scope>IDENTIFICATION BY MASS SPECTROMETRY [LARGE SCALE ANALYSIS]</scope>
</reference>
<reference key="16">
    <citation type="journal article" date="2011" name="Sci. Signal.">
        <title>System-wide temporal characterization of the proteome and phosphoproteome of human embryonic stem cell differentiation.</title>
        <authorList>
            <person name="Rigbolt K.T."/>
            <person name="Prokhorova T.A."/>
            <person name="Akimov V."/>
            <person name="Henningsen J."/>
            <person name="Johansen P.T."/>
            <person name="Kratchmarova I."/>
            <person name="Kassem M."/>
            <person name="Mann M."/>
            <person name="Olsen J.V."/>
            <person name="Blagoev B."/>
        </authorList>
    </citation>
    <scope>PHOSPHORYLATION [LARGE SCALE ANALYSIS] AT THR-647; THR-1944 AND SER-2928</scope>
    <scope>IDENTIFICATION BY MASS SPECTROMETRY [LARGE SCALE ANALYSIS]</scope>
</reference>
<reference key="17">
    <citation type="journal article" date="2012" name="J. Cell Biol.">
        <title>DNA damage-inducible SUMOylation of HERC2 promotes RNF8 binding via a novel SUMO-binding Zinc finger.</title>
        <authorList>
            <person name="Danielsen J.R."/>
            <person name="Povlsen L.K."/>
            <person name="Villumsen B.H."/>
            <person name="Streicher W."/>
            <person name="Nilsson J."/>
            <person name="Wikstrom M."/>
            <person name="Bekker-Jensen S."/>
            <person name="Mailand N."/>
        </authorList>
    </citation>
    <scope>SUMOYLATION</scope>
    <scope>FUNCTION</scope>
    <scope>SUMO-BINDING</scope>
    <scope>DOMAIN</scope>
    <scope>INTERACTION WITH RNF8</scope>
    <scope>MUTAGENESIS OF CYS-2708 AND CYS-2711</scope>
</reference>
<reference key="18">
    <citation type="journal article" date="2012" name="Mol. Cell. Proteomics">
        <title>Interaction proteomics identify NEURL4 and the HECT E3 ligase HERC2 as novel modulators of centrosome architecture.</title>
        <authorList>
            <person name="Al-Hakim A.K."/>
            <person name="Bashkurov M."/>
            <person name="Gingras A.C."/>
            <person name="Durocher D."/>
            <person name="Pelletier L."/>
        </authorList>
    </citation>
    <scope>INTERACTION WITH CCP110; CEP97 AND NEURL4</scope>
    <scope>SUBCELLULAR LOCATION</scope>
</reference>
<reference key="19">
    <citation type="journal article" date="2013" name="J. Proteome Res.">
        <title>Toward a comprehensive characterization of a human cancer cell phosphoproteome.</title>
        <authorList>
            <person name="Zhou H."/>
            <person name="Di Palma S."/>
            <person name="Preisinger C."/>
            <person name="Peng M."/>
            <person name="Polat A.N."/>
            <person name="Heck A.J."/>
            <person name="Mohammed S."/>
        </authorList>
    </citation>
    <scope>PHOSPHORYLATION [LARGE SCALE ANALYSIS] AT THR-272; SER-2454 AND SER-2928</scope>
    <scope>IDENTIFICATION BY MASS SPECTROMETRY [LARGE SCALE ANALYSIS]</scope>
    <source>
        <tissue>Erythroleukemia</tissue>
    </source>
</reference>
<reference key="20">
    <citation type="journal article" date="2014" name="J. Biol. Chem.">
        <title>HERC2 targets the iron regulator FBXL5 for degradation and modulates iron metabolism.</title>
        <authorList>
            <person name="Moroishi T."/>
            <person name="Yamauchi T."/>
            <person name="Nishiyama M."/>
            <person name="Nakayama K.I."/>
        </authorList>
    </citation>
    <scope>FUNCTION</scope>
</reference>
<reference key="21">
    <citation type="journal article" date="2016" name="Nat. Med.">
        <title>Loss of the proteostasis factor AIRAPL causes myeloid transformation by deregulating IGF-1 signaling.</title>
        <authorList>
            <person name="Osorio F.G."/>
            <person name="Soria-Valles C."/>
            <person name="Santiago-Fernandez O."/>
            <person name="Bernal T."/>
            <person name="Mittelbrunn M."/>
            <person name="Colado E."/>
            <person name="Rodriguez F."/>
            <person name="Bonzon-Kulichenko E."/>
            <person name="Vazquez J."/>
            <person name="Porta-de-la-Riva M."/>
            <person name="Ceron J."/>
            <person name="Fueyo A."/>
            <person name="Li J."/>
            <person name="Green A.R."/>
            <person name="Freije J.M."/>
            <person name="Lopez-Otin C."/>
        </authorList>
    </citation>
    <scope>FUNCTION</scope>
</reference>
<reference key="22">
    <citation type="submission" date="2013-06" db="PDB data bank">
        <title>Structure of the first RCC1-like domain of HERC2.</title>
        <authorList>
            <person name="Tempel W."/>
            <person name="Khan M.B."/>
            <person name="Dong A."/>
            <person name="Hu J."/>
            <person name="Li Y."/>
            <person name="Bountra C."/>
            <person name="Arrowsmith C.H."/>
            <person name="Edwards A.M."/>
            <person name="Tong Y."/>
        </authorList>
    </citation>
    <scope>X-RAY CRYSTALLOGRAPHY (2.6 ANGSTROMS) OF 417-790</scope>
    <scope>RCC1 REPEATS</scope>
</reference>
<reference key="23">
    <citation type="journal article" date="2012" name="Hum. Mutat.">
        <title>A homozygous missense mutation in HERC2 associated with global developmental delay and autism spectrum disorder.</title>
        <authorList>
            <person name="Puffenberger E.G."/>
            <person name="Jinks R.N."/>
            <person name="Wang H."/>
            <person name="Xin B."/>
            <person name="Fiorentini C."/>
            <person name="Sherman E.A."/>
            <person name="Degrazio D."/>
            <person name="Shaw C."/>
            <person name="Sougnez C."/>
            <person name="Cibulskis K."/>
            <person name="Gabriel S."/>
            <person name="Kelley R.I."/>
            <person name="Morton D.H."/>
            <person name="Strauss K.A."/>
        </authorList>
    </citation>
    <scope>VARIANT MRT38 LEU-594</scope>
    <scope>CHARACTERIZATION OF VARIANT MRT38 LEU-594</scope>
</reference>
<keyword id="KW-0002">3D-structure</keyword>
<keyword id="KW-0175">Coiled coil</keyword>
<keyword id="KW-0963">Cytoplasm</keyword>
<keyword id="KW-0206">Cytoskeleton</keyword>
<keyword id="KW-0225">Disease variant</keyword>
<keyword id="KW-0227">DNA damage</keyword>
<keyword id="KW-0234">DNA repair</keyword>
<keyword id="KW-0991">Intellectual disability</keyword>
<keyword id="KW-0479">Metal-binding</keyword>
<keyword id="KW-0539">Nucleus</keyword>
<keyword id="KW-0597">Phosphoprotein</keyword>
<keyword id="KW-1267">Proteomics identification</keyword>
<keyword id="KW-1185">Reference proteome</keyword>
<keyword id="KW-0677">Repeat</keyword>
<keyword id="KW-0808">Transferase</keyword>
<keyword id="KW-0832">Ubl conjugation</keyword>
<keyword id="KW-0833">Ubl conjugation pathway</keyword>
<keyword id="KW-0862">Zinc</keyword>
<keyword id="KW-0863">Zinc-finger</keyword>
<evidence type="ECO:0000250" key="1">
    <source>
        <dbReference type="UniProtKB" id="Q4U2R1"/>
    </source>
</evidence>
<evidence type="ECO:0000255" key="2"/>
<evidence type="ECO:0000255" key="3">
    <source>
        <dbReference type="PROSITE-ProRule" id="PRU00104"/>
    </source>
</evidence>
<evidence type="ECO:0000255" key="4">
    <source>
        <dbReference type="PROSITE-ProRule" id="PRU00228"/>
    </source>
</evidence>
<evidence type="ECO:0000255" key="5">
    <source>
        <dbReference type="PROSITE-ProRule" id="PRU00235"/>
    </source>
</evidence>
<evidence type="ECO:0000255" key="6">
    <source>
        <dbReference type="PROSITE-ProRule" id="PRU00279"/>
    </source>
</evidence>
<evidence type="ECO:0000255" key="7">
    <source>
        <dbReference type="PROSITE-ProRule" id="PRU00614"/>
    </source>
</evidence>
<evidence type="ECO:0000255" key="8">
    <source>
        <dbReference type="PROSITE-ProRule" id="PRU00749"/>
    </source>
</evidence>
<evidence type="ECO:0000256" key="9">
    <source>
        <dbReference type="SAM" id="MobiDB-lite"/>
    </source>
</evidence>
<evidence type="ECO:0000269" key="10">
    <source>
    </source>
</evidence>
<evidence type="ECO:0000269" key="11">
    <source>
    </source>
</evidence>
<evidence type="ECO:0000269" key="12">
    <source>
    </source>
</evidence>
<evidence type="ECO:0000269" key="13">
    <source>
    </source>
</evidence>
<evidence type="ECO:0000269" key="14">
    <source>
    </source>
</evidence>
<evidence type="ECO:0000269" key="15">
    <source>
    </source>
</evidence>
<evidence type="ECO:0000269" key="16">
    <source>
    </source>
</evidence>
<evidence type="ECO:0000269" key="17">
    <source>
    </source>
</evidence>
<evidence type="ECO:0000269" key="18">
    <source>
    </source>
</evidence>
<evidence type="ECO:0000269" key="19">
    <source>
    </source>
</evidence>
<evidence type="ECO:0000269" key="20">
    <source>
    </source>
</evidence>
<evidence type="ECO:0000269" key="21">
    <source ref="22"/>
</evidence>
<evidence type="ECO:0000305" key="22"/>
<evidence type="ECO:0000312" key="23">
    <source>
        <dbReference type="EMBL" id="AAD08657.1"/>
    </source>
</evidence>
<evidence type="ECO:0000312" key="24">
    <source>
        <dbReference type="EMBL" id="AAO27483.1"/>
    </source>
</evidence>
<evidence type="ECO:0007744" key="25">
    <source>
    </source>
</evidence>
<evidence type="ECO:0007744" key="26">
    <source>
    </source>
</evidence>
<evidence type="ECO:0007744" key="27">
    <source>
    </source>
</evidence>
<evidence type="ECO:0007744" key="28">
    <source>
    </source>
</evidence>
<evidence type="ECO:0007744" key="29">
    <source>
    </source>
</evidence>
<evidence type="ECO:0007744" key="30">
    <source>
    </source>
</evidence>
<evidence type="ECO:0007829" key="31">
    <source>
        <dbReference type="PDB" id="2KEO"/>
    </source>
</evidence>
<evidence type="ECO:0007829" key="32">
    <source>
        <dbReference type="PDB" id="3KCI"/>
    </source>
</evidence>
<evidence type="ECO:0007829" key="33">
    <source>
        <dbReference type="PDB" id="4L1M"/>
    </source>
</evidence>
<evidence type="ECO:0007829" key="34">
    <source>
        <dbReference type="PDB" id="6WW3"/>
    </source>
</evidence>
<evidence type="ECO:0007829" key="35">
    <source>
        <dbReference type="PDB" id="7Q42"/>
    </source>
</evidence>
<evidence type="ECO:0007829" key="36">
    <source>
        <dbReference type="PDB" id="7Q43"/>
    </source>
</evidence>
<evidence type="ECO:0007829" key="37">
    <source>
        <dbReference type="PDB" id="7RGW"/>
    </source>
</evidence>
<organism>
    <name type="scientific">Homo sapiens</name>
    <name type="common">Human</name>
    <dbReference type="NCBI Taxonomy" id="9606"/>
    <lineage>
        <taxon>Eukaryota</taxon>
        <taxon>Metazoa</taxon>
        <taxon>Chordata</taxon>
        <taxon>Craniata</taxon>
        <taxon>Vertebrata</taxon>
        <taxon>Euteleostomi</taxon>
        <taxon>Mammalia</taxon>
        <taxon>Eutheria</taxon>
        <taxon>Euarchontoglires</taxon>
        <taxon>Primates</taxon>
        <taxon>Haplorrhini</taxon>
        <taxon>Catarrhini</taxon>
        <taxon>Hominidae</taxon>
        <taxon>Homo</taxon>
    </lineage>
</organism>
<sequence>MPSESFCLAAQARLDSKWLKTDIQLAFTRDGLCGLWNEMVKDGEIVYTGTESTQNGELPPRKDDSVEPSGTKKEDLNDKEKKDEEETPAPIYRAKSILDSWVWGKQPDVNELKECLSVLVKEQQALAVQSATTTLSALRLKQRLVILERYFIALNRTVFQENVKVKWKSSGISLPPVDKKSSRPAGKGVEGLARVGSRAALSFAFAFLRRAWRSGEDADLCSELLQESLDALRALPEASLFDESTVSSVWLEVVERATRFLRSVVTGDVHGTPATKGPGSIPLQDQHLALAILLELAVQRGTLSQMLSAILLLLQLWDSGAQETDNERSAQGTSAPLLPLLQRFQSIICRKDAPHSEGDMHLLSGPLSPNESFLRYLTLPQDNELAIDLRQTAVVVMAHLDRLATPCMPPLCSSPTSHKGSLQEVIGWGLIGWKYYANVIGPIQCEGLANLGVTQIACAEKRFLILSRNGRVYTQAYNSDTLAPQLVQGLASRNIVKIAAHSDGHHYLALAATGEVYSWGCGDGGRLGHGDTVPLEEPKVISAFSGKQAGKHVVHIACGSTYSAAITAEGELYTWGRGNYGRLGHGSSEDEAIPMLVAGLKGLKVIDVACGSGDAQTLAVTENGQVWSWGDGDYGKLGRGGSDGCKTPKLIEKLQDLDVVKVRCGSQFSIALTKDGQVYSWGKGDNQRLGHGTEEHVRYPKLLEGLQGKKVIDVAAGSTHCLALTEDSEVHSWGSNDQCQHFDTLRVTKPEPAALPGLDTKHIVGIACGPAQSFAWSSCSEWSIGLRVPFVVDICSMTFEQLDLLLRQVSEGMDGSADWPPPQEKECVAVATLNLLRLQLHAAISHQVDPEFLGLGLGSILLNSLKQTVVTLASSAGVLSTVQSAAQAVLQSGWSVLLPTAEERARALSALLPCAVSGNEVNISPGRRFMIDLLVGSLMADGGLESALHAAITAEIQDIEAKKEAQKEKEIDEQEANASTFHRSRTPLDKDLINTGICESSGKQCLPLVQLIQQLLRNIASQTVARLKDVARRISSCLDFEQHSRERSASLDLLLRFQRLLISKLYPGESIGQTSDISSPELMGVGSLLKKYTALLCTHIGDILPVAASIASTSWRHFAEVAYIVEGDFTGVLLPELVVSIVLLLSKNAGLMQEAGAVPLLGGLLEHLDRFNHLAPGKERDDHEELAWPGIMESFFTGQNCRNNEEVTLIRKADLENHNKDGGFWTVIDGKVYDIKDFQTQSLTGNSILAQFAGEDPVVALEAALQFEDTRESMHAFCVGQYLEPDQEIVTIPDLGSLSSPLIDTERNLGLLLGLHASYLAMSTPLSPVEIECAKWLQSSIFSGGLQTSQIHYSYNEEKDEDHCSSPGGTPASKSRLCSHRRALGDHSQAFLQAIADNNIQDHNVKDFLCQIERYCRQCHLTTPIMFPPEHPVEEVGRLLLCCLLKHEDLGHVALSLVHAGALGIEQVKHRTLPKSVVDVCRVVYQAKCSLIKTHQEQGRSYKEVCAPVIERLRFLFNELRPAVCNDLSIMSKFKLLSSLPRWRRIAQKIIRERRKKRVPKKPESTDDEEKIGNEESDLEEACILPHSPINVDKRPIAIKSPKDKWQPLLSTVTGVHKYKWLKQNVQGLYPQSPLLSTIAEFALKEEPVDVEKMRKCLLKQLERAEVRLEGIDTILKLASKNFLLPSVQYAMFCGWQRLIPEGIDIGEPLTDCLKDVDLIPPFNRMLLEVTFGKLYAWAVQNIRNVLMDASAKFKELGIQPVPLQTITNENPSGPSLGTIPQARFLLVMLSMLTLQHGANNLDLLLNSGMLALTQTALRLIGPSCDNVEEDMNASAQGASATVLEETRKETAPVQLPVSGPELAAMMKIGTRVMRGVDWKWGDQDGPPPGLGRVIGELGEDGWIRVQWDTGSTNSYRMGKEGKYDLKLAELPAAAQPSAEDSDTEDDSEAEQTERNIHPTAMMFTSTINLLQTLCLSAGVHAEIMQSEATKTLCGLLRMLVESGTTDKTSSPNRLVYREQHRSWCTLGFVRSIALTPQVCGALSSPQWITLLMKVVEGHAPFTATSLQRQILAVHLLQAVLPSWDKTERARDMKCLVEKLFDFLGSLLTTCSSDVPLLRESTLRRRRVRPQASLTATHSSTLAEEVVALLRTLHSLTQWNGLINKYINSQLRSITHSFVGRPSEGAQLEDYFPDSENPEVGGLMAVLAVIGGIDGRLRLGGQVMHDEFGEGTVTRITPKGKITVQFSDMRTCRVCPLNQLKPLPAVAFNVNNLPFTEPMLSVWAQLVNLAGSKLEKHKIKKSTKQAFAGQVDLDLLRCQQLKLYILKAGRALLSHQDKLRQILSQPAVQETGTVHTDDGAVVSPDLGDMSPEGPQPPMILLQQLLASATQPSPVKAIFDKQELEAAALAVCQCLAVESTHPSSPGFEDCSSSEATTPVAVQHIRPARVKRRKQSPVPALPIVVQLMEMGFSRRNIEFALKSLTGASGNASSLPGVEALVGWLLDHSDIQVTELSDADTVSDEYSDEEVVEDVDDAAYSMSTGAVVTESQTYKKRADFLSNDDYAVYVRENIQVGMMVRCCRAYEEVCEGDVGKVIKLDRDGLHDLNVQCDWQQKGGTYWVRYIHVELIGYPPPSSSSHIKIGDKVRVKASVTTPKYKWGSVTHQSVGVVKAFSANGKDIIVDFPQQSHWTGLLSEMELVPSIHPGVTCDGCQMFPINGSRFKCRNCDDFDFCETCFKTKKHNTRHTFGRINEPGQSAVFCGRSGKQLKRCHSSQPGMLLDSWSRMVKSLNVSSSVNQASRLIDGSEPCWQSSGSQGKHWIRLEIFPDVLVHRLKMIVDPADSSYMPSLVVVSGGNSLNNLIELKTININPSDTTVPLLNDCTEYHRYIEIAIKQCRSSGIDCKIHGLILLGRIRAEEEDLAAVPFLASDNEEEEDEKGNSGSLIRKKAAGLESAATIRTKVFVWGLNDKDQLGGLKGSKIKVPSFSETLSALNVVQVAGGSKSLFAVTVEGKVYACGEATNGRLGLGISSGTVPIPRQITALSSYVVKKVAVHSGGRHATALTVDGKVFSWGEGDDGKLGHFSRMNCDKPRLIEALKTKRIRDIACGSSHSAALTSSGELYTWGLGEYGRLGHGDNTTQLKPKMVKVLLGHRVIQVACGSRDAQTLALTDEGLVFSWGDGDFGKLGRGGSEGCNIPQNIERLNGQGVCQIECGAQFSLALTKSGVVWTWGKGDYFRLGHGSDVHVRKPQVVEGLRGKKIVHVAVGALHCLAVTDSGQVYAWGDNDHGQQGNGTTTVNRKPTLVQGLEGQKITRVACGSSHSVAWTTVDVATPSVHEPVLFQTARDPLGASYLGVPSDADSSAASNKISGASNSKPNRPSLAKILLSLDGNLAKQQALSHILTALQIMYARDAVVGALMPAAMIAPVECPSFSSAAPSDASAMASPMNGEECMLAVDIEDRLSPNPWQEKREIVSSEDAVTPSAVTPSAPSASARPFIPVTDDLGAASIIAETMTKTKEDVESQNKAAGPEPQALDEFTSLLIADDTRVVVDLLKLSVCSRAGDRGRDVLSAVLSGMGTAYPQVADMLLELCVTELEDVATDSQSGRLSSQPVVVESSHPYTDDTSTSGTVKIPGAEGLRVEFDRQCSTERRHDPLTVMDGVNRIVSVRSGREWSDWSSELRIPGDELKWKFISDGSVNGWGWRFTVYPIMPAAGPKELLSDRCVLSCPSMDLVTCLLDFRLNLASNRSIVPRLAASLAACAQLSALAASHRMWALQRLRKLLTTEFGQSININRLLGENDGETRALSFTGSALAALVKGLPEALQRQFEYEDPIVRGGKQLLHSPFFKVLVALACDLELDTLPCCAETHKWAWFRRYCMASRVAVALDKRTPLPRLFLDEVAKKIRELMADSENMDVLHESHDIFKREQDEQLVQWMNRRPDDWTLSAGGSGTIYGWGHNHRGQLGGIEGAKVKVPTPCEALATLRPVQLIGGEQTLFAVTADGKLYATGYGAGGRLGIGGTESVSTPTLLESIQHVFIKKVAVNSGGKHCLALSSEGEVYSWGEAEDGKLGHGNRSPCDRPRVIESLRGIEVVDVAAGGAHSACVTAAGDLYTWGKGRYGRLGHSDSEDQLKPKLVEALQGHRVVDIACGSGDAQTLCLTDDDTVWSWGDGDYGKLGRGGSDGCKVPMKIDSLTGLGVVKVECGSQFSVALTKSGAVYTWGKGDYHRLGHGSDDHVRRPRQVQGLQGKKVIAIATGSLHCVCCTEDGEVYTWGDNDEGQLGDGTTNAIQRPRLVAALQGKKVNRVACGSAHTLAWSTSKPASAGKLPAQVPMEYNHLQEIPIIALRNRLLLLHHLSELFCPCIPMFDLEGSLDETGLGPSVGFDTLRGILISQGKEAAFRKVVQATMVRDRQHGPVVELNRIQVKRSRSKGGLAGPDGTKSVFGQMCAKMSSFGPDSLLLPHRVWKVKFVGESVDDCGGGYSESIAEICEELQNGLTPLLIVTPNGRDESGANRDCYLLSPAARAPVHSSMFRFLGVLLGIAIRTGSPLSLNLAEPVWKQLAGMSLTIADLSEVDKDFIPGLMYIRDNEATSEEFEAMSLPFTVPSASGQDIQLSSKHTHITLDNRAEYVRLAINYRLHEFDEQVAAVREGMARVVPVPLLSLFTGYELETMVCGSPDIPLHLLKSVATYKGIEPSASLIQWFWEVMESFSNTERSLFLRFVWGRTRLPRTIADFRGRDFVIQVLDKYNPPDHFLPESYTCFFLLKLPRYSCKQVLEEKLKYAIHFCKSIDTDDYARIALTGEPAADDSSDDSDNEDVDSFASDSTQDYLTGH</sequence>
<dbReference type="EC" id="2.3.2.26" evidence="14"/>
<dbReference type="EMBL" id="AF071172">
    <property type="protein sequence ID" value="AAD08657.1"/>
    <property type="molecule type" value="mRNA"/>
</dbReference>
<dbReference type="EMBL" id="AC091304">
    <property type="status" value="NOT_ANNOTATED_CDS"/>
    <property type="molecule type" value="Genomic_DNA"/>
</dbReference>
<dbReference type="EMBL" id="AC126332">
    <property type="status" value="NOT_ANNOTATED_CDS"/>
    <property type="molecule type" value="Genomic_DNA"/>
</dbReference>
<dbReference type="EMBL" id="AC135329">
    <property type="status" value="NOT_ANNOTATED_CDS"/>
    <property type="molecule type" value="Genomic_DNA"/>
</dbReference>
<dbReference type="EMBL" id="AF224243">
    <property type="protein sequence ID" value="AAO27473.1"/>
    <property type="molecule type" value="Genomic_DNA"/>
</dbReference>
<dbReference type="EMBL" id="AF224242">
    <property type="protein sequence ID" value="AAO27473.1"/>
    <property type="status" value="JOINED"/>
    <property type="molecule type" value="Genomic_DNA"/>
</dbReference>
<dbReference type="EMBL" id="AF224245">
    <property type="protein sequence ID" value="AAO27474.1"/>
    <property type="molecule type" value="Genomic_DNA"/>
</dbReference>
<dbReference type="EMBL" id="AF224244">
    <property type="protein sequence ID" value="AAO27474.1"/>
    <property type="status" value="JOINED"/>
    <property type="molecule type" value="Genomic_DNA"/>
</dbReference>
<dbReference type="EMBL" id="AF224249">
    <property type="protein sequence ID" value="AAO27475.1"/>
    <property type="molecule type" value="Genomic_DNA"/>
</dbReference>
<dbReference type="EMBL" id="AF224246">
    <property type="protein sequence ID" value="AAO27475.1"/>
    <property type="status" value="JOINED"/>
    <property type="molecule type" value="Genomic_DNA"/>
</dbReference>
<dbReference type="EMBL" id="AF224247">
    <property type="protein sequence ID" value="AAO27475.1"/>
    <property type="status" value="JOINED"/>
    <property type="molecule type" value="Genomic_DNA"/>
</dbReference>
<dbReference type="EMBL" id="AF224248">
    <property type="protein sequence ID" value="AAO27475.1"/>
    <property type="status" value="JOINED"/>
    <property type="molecule type" value="Genomic_DNA"/>
</dbReference>
<dbReference type="EMBL" id="AF224251">
    <property type="protein sequence ID" value="AAO27476.1"/>
    <property type="molecule type" value="Genomic_DNA"/>
</dbReference>
<dbReference type="EMBL" id="AF224250">
    <property type="protein sequence ID" value="AAO27476.1"/>
    <property type="status" value="JOINED"/>
    <property type="molecule type" value="Genomic_DNA"/>
</dbReference>
<dbReference type="EMBL" id="AF224255">
    <property type="protein sequence ID" value="AAO27479.1"/>
    <property type="molecule type" value="Genomic_DNA"/>
</dbReference>
<dbReference type="EMBL" id="AF224254">
    <property type="protein sequence ID" value="AAO27479.1"/>
    <property type="status" value="JOINED"/>
    <property type="molecule type" value="Genomic_DNA"/>
</dbReference>
<dbReference type="EMBL" id="AF224252">
    <property type="protein sequence ID" value="AAO27477.1"/>
    <property type="molecule type" value="Genomic_DNA"/>
</dbReference>
<dbReference type="EMBL" id="AF224253">
    <property type="protein sequence ID" value="AAO27478.1"/>
    <property type="molecule type" value="Genomic_DNA"/>
</dbReference>
<dbReference type="EMBL" id="AF224257">
    <property type="protein sequence ID" value="AAO27480.1"/>
    <property type="molecule type" value="Genomic_DNA"/>
</dbReference>
<dbReference type="EMBL" id="AF224256">
    <property type="protein sequence ID" value="AAO27480.1"/>
    <property type="status" value="JOINED"/>
    <property type="molecule type" value="Genomic_DNA"/>
</dbReference>
<dbReference type="EMBL" id="AF225401">
    <property type="protein sequence ID" value="AAO27481.1"/>
    <property type="molecule type" value="Genomic_DNA"/>
</dbReference>
<dbReference type="EMBL" id="AF225400">
    <property type="protein sequence ID" value="AAO27481.1"/>
    <property type="status" value="JOINED"/>
    <property type="molecule type" value="Genomic_DNA"/>
</dbReference>
<dbReference type="EMBL" id="AF225404">
    <property type="protein sequence ID" value="AAO27482.1"/>
    <property type="molecule type" value="Genomic_DNA"/>
</dbReference>
<dbReference type="EMBL" id="AF225402">
    <property type="protein sequence ID" value="AAO27482.1"/>
    <property type="status" value="JOINED"/>
    <property type="molecule type" value="Genomic_DNA"/>
</dbReference>
<dbReference type="EMBL" id="AF225403">
    <property type="protein sequence ID" value="AAO27482.1"/>
    <property type="status" value="JOINED"/>
    <property type="molecule type" value="Genomic_DNA"/>
</dbReference>
<dbReference type="EMBL" id="AF225407">
    <property type="protein sequence ID" value="AAO27483.1"/>
    <property type="molecule type" value="Genomic_DNA"/>
</dbReference>
<dbReference type="EMBL" id="AF225405">
    <property type="protein sequence ID" value="AAO27483.1"/>
    <property type="status" value="JOINED"/>
    <property type="molecule type" value="Genomic_DNA"/>
</dbReference>
<dbReference type="EMBL" id="AF225406">
    <property type="protein sequence ID" value="AAO27483.1"/>
    <property type="status" value="JOINED"/>
    <property type="molecule type" value="Genomic_DNA"/>
</dbReference>
<dbReference type="EMBL" id="AF225409">
    <property type="protein sequence ID" value="AAO27484.1"/>
    <property type="molecule type" value="Genomic_DNA"/>
</dbReference>
<dbReference type="EMBL" id="AF225408">
    <property type="protein sequence ID" value="AAO27484.1"/>
    <property type="status" value="JOINED"/>
    <property type="molecule type" value="Genomic_DNA"/>
</dbReference>
<dbReference type="CCDS" id="CCDS10021.1"/>
<dbReference type="RefSeq" id="NP_004658.3">
    <property type="nucleotide sequence ID" value="NM_004667.6"/>
</dbReference>
<dbReference type="PDB" id="2KEO">
    <property type="method" value="NMR"/>
    <property type="chains" value="A=1203-1296"/>
</dbReference>
<dbReference type="PDB" id="3KCI">
    <property type="method" value="X-ray"/>
    <property type="resolution" value="1.80 A"/>
    <property type="chains" value="A=3951-4321"/>
</dbReference>
<dbReference type="PDB" id="4L1M">
    <property type="method" value="X-ray"/>
    <property type="resolution" value="2.60 A"/>
    <property type="chains" value="A/B/C=417-790"/>
</dbReference>
<dbReference type="PDB" id="6WW3">
    <property type="method" value="X-ray"/>
    <property type="resolution" value="2.10 A"/>
    <property type="chains" value="A/B=2702-2755"/>
</dbReference>
<dbReference type="PDB" id="6WW4">
    <property type="method" value="X-ray"/>
    <property type="resolution" value="2.25 A"/>
    <property type="chains" value="A/B=2702-2751"/>
</dbReference>
<dbReference type="PDB" id="7Q40">
    <property type="method" value="X-ray"/>
    <property type="resolution" value="2.35 A"/>
    <property type="chains" value="A/C/E=2938-3342"/>
</dbReference>
<dbReference type="PDB" id="7Q41">
    <property type="method" value="X-ray"/>
    <property type="resolution" value="3.01 A"/>
    <property type="chains" value="A/C/E=2938-3342"/>
</dbReference>
<dbReference type="PDB" id="7Q42">
    <property type="method" value="X-ray"/>
    <property type="resolution" value="1.95 A"/>
    <property type="chains" value="A/C/E=2938-3342"/>
</dbReference>
<dbReference type="PDB" id="7Q43">
    <property type="method" value="X-ray"/>
    <property type="resolution" value="2.40 A"/>
    <property type="chains" value="A/C/E=2941-3342"/>
</dbReference>
<dbReference type="PDB" id="7Q44">
    <property type="method" value="X-ray"/>
    <property type="resolution" value="2.20 A"/>
    <property type="chains" value="A/C/E=2941-3342"/>
</dbReference>
<dbReference type="PDB" id="7Q45">
    <property type="method" value="X-ray"/>
    <property type="resolution" value="2.10 A"/>
    <property type="chains" value="A/C/E=2938-3342"/>
</dbReference>
<dbReference type="PDB" id="7Q46">
    <property type="method" value="X-ray"/>
    <property type="resolution" value="2.46 A"/>
    <property type="chains" value="A/C/E=2941-3342"/>
</dbReference>
<dbReference type="PDB" id="7RGW">
    <property type="method" value="X-ray"/>
    <property type="resolution" value="1.99 A"/>
    <property type="chains" value="A=2759-2914"/>
</dbReference>
<dbReference type="PDBsum" id="2KEO"/>
<dbReference type="PDBsum" id="3KCI"/>
<dbReference type="PDBsum" id="4L1M"/>
<dbReference type="PDBsum" id="6WW3"/>
<dbReference type="PDBsum" id="6WW4"/>
<dbReference type="PDBsum" id="7Q40"/>
<dbReference type="PDBsum" id="7Q41"/>
<dbReference type="PDBsum" id="7Q42"/>
<dbReference type="PDBsum" id="7Q43"/>
<dbReference type="PDBsum" id="7Q44"/>
<dbReference type="PDBsum" id="7Q45"/>
<dbReference type="PDBsum" id="7Q46"/>
<dbReference type="PDBsum" id="7RGW"/>
<dbReference type="SMR" id="O95714"/>
<dbReference type="BioGRID" id="114438">
    <property type="interactions" value="481"/>
</dbReference>
<dbReference type="CORUM" id="O95714"/>
<dbReference type="DIP" id="DIP-37632N"/>
<dbReference type="FunCoup" id="O95714">
    <property type="interactions" value="1954"/>
</dbReference>
<dbReference type="IntAct" id="O95714">
    <property type="interactions" value="197"/>
</dbReference>
<dbReference type="MINT" id="O95714"/>
<dbReference type="STRING" id="9606.ENSP00000261609"/>
<dbReference type="GlyConnect" id="1191">
    <property type="glycosylation" value="2 N-Linked glycans (2 sites)"/>
</dbReference>
<dbReference type="GlyCosmos" id="O95714">
    <property type="glycosylation" value="4 sites, 4 glycans"/>
</dbReference>
<dbReference type="GlyGen" id="O95714">
    <property type="glycosylation" value="12 sites, 6 N-linked glycans (4 sites), 1 O-linked glycan (4 sites)"/>
</dbReference>
<dbReference type="iPTMnet" id="O95714"/>
<dbReference type="PhosphoSitePlus" id="O95714"/>
<dbReference type="SwissPalm" id="O95714"/>
<dbReference type="BioMuta" id="HERC2"/>
<dbReference type="jPOST" id="O95714"/>
<dbReference type="MassIVE" id="O95714"/>
<dbReference type="PaxDb" id="9606-ENSP00000261609"/>
<dbReference type="PeptideAtlas" id="O95714"/>
<dbReference type="ProteomicsDB" id="51008"/>
<dbReference type="Pumba" id="O95714"/>
<dbReference type="Antibodypedia" id="22335">
    <property type="antibodies" value="54 antibodies from 10 providers"/>
</dbReference>
<dbReference type="DNASU" id="8924"/>
<dbReference type="Ensembl" id="ENST00000261609.13">
    <property type="protein sequence ID" value="ENSP00000261609.8"/>
    <property type="gene ID" value="ENSG00000128731.18"/>
</dbReference>
<dbReference type="GeneID" id="8924"/>
<dbReference type="KEGG" id="hsa:8924"/>
<dbReference type="MANE-Select" id="ENST00000261609.13">
    <property type="protein sequence ID" value="ENSP00000261609.8"/>
    <property type="RefSeq nucleotide sequence ID" value="NM_004667.6"/>
    <property type="RefSeq protein sequence ID" value="NP_004658.3"/>
</dbReference>
<dbReference type="UCSC" id="uc001zbj.5">
    <property type="organism name" value="human"/>
</dbReference>
<dbReference type="AGR" id="HGNC:4868"/>
<dbReference type="CTD" id="8924"/>
<dbReference type="DisGeNET" id="8924"/>
<dbReference type="GeneCards" id="HERC2"/>
<dbReference type="GeneReviews" id="HERC2"/>
<dbReference type="HGNC" id="HGNC:4868">
    <property type="gene designation" value="HERC2"/>
</dbReference>
<dbReference type="HPA" id="ENSG00000128731">
    <property type="expression patterns" value="Low tissue specificity"/>
</dbReference>
<dbReference type="MalaCards" id="HERC2"/>
<dbReference type="MIM" id="227220">
    <property type="type" value="phenotype"/>
</dbReference>
<dbReference type="MIM" id="605837">
    <property type="type" value="gene"/>
</dbReference>
<dbReference type="MIM" id="615516">
    <property type="type" value="phenotype"/>
</dbReference>
<dbReference type="neXtProt" id="NX_O95714"/>
<dbReference type="OpenTargets" id="ENSG00000128731"/>
<dbReference type="Orphanet" id="329195">
    <property type="disease" value="Developmental delay with autism spectrum disorder and gait instability"/>
</dbReference>
<dbReference type="PharmGKB" id="PA29243"/>
<dbReference type="VEuPathDB" id="HostDB:ENSG00000128731"/>
<dbReference type="eggNOG" id="KOG1426">
    <property type="taxonomic scope" value="Eukaryota"/>
</dbReference>
<dbReference type="GeneTree" id="ENSGT00940000154975"/>
<dbReference type="HOGENOM" id="CLU_000101_0_0_1"/>
<dbReference type="InParanoid" id="O95714"/>
<dbReference type="OMA" id="WRNHGST"/>
<dbReference type="OrthoDB" id="9522724at2759"/>
<dbReference type="PAN-GO" id="O95714">
    <property type="GO annotations" value="4 GO annotations based on evolutionary models"/>
</dbReference>
<dbReference type="PhylomeDB" id="O95714"/>
<dbReference type="TreeFam" id="TF320636"/>
<dbReference type="PathwayCommons" id="O95714"/>
<dbReference type="Reactome" id="R-HSA-3108214">
    <property type="pathway name" value="SUMOylation of DNA damage response and repair proteins"/>
</dbReference>
<dbReference type="Reactome" id="R-HSA-5693565">
    <property type="pathway name" value="Recruitment and ATM-mediated phosphorylation of repair and signaling proteins at DNA double strand breaks"/>
</dbReference>
<dbReference type="Reactome" id="R-HSA-5693571">
    <property type="pathway name" value="Nonhomologous End-Joining (NHEJ)"/>
</dbReference>
<dbReference type="Reactome" id="R-HSA-5693607">
    <property type="pathway name" value="Processing of DNA double-strand break ends"/>
</dbReference>
<dbReference type="Reactome" id="R-HSA-69473">
    <property type="pathway name" value="G2/M DNA damage checkpoint"/>
</dbReference>
<dbReference type="Reactome" id="R-HSA-983168">
    <property type="pathway name" value="Antigen processing: Ubiquitination &amp; Proteasome degradation"/>
</dbReference>
<dbReference type="SignaLink" id="O95714"/>
<dbReference type="SIGNOR" id="O95714"/>
<dbReference type="UniPathway" id="UPA00143"/>
<dbReference type="BioGRID-ORCS" id="8924">
    <property type="hits" value="45 hits in 1203 CRISPR screens"/>
</dbReference>
<dbReference type="CD-CODE" id="8C2F96ED">
    <property type="entry name" value="Centrosome"/>
</dbReference>
<dbReference type="ChiTaRS" id="HERC2">
    <property type="organism name" value="human"/>
</dbReference>
<dbReference type="EvolutionaryTrace" id="O95714"/>
<dbReference type="GeneWiki" id="HERC2"/>
<dbReference type="GenomeRNAi" id="8924"/>
<dbReference type="Pharos" id="O95714">
    <property type="development level" value="Tbio"/>
</dbReference>
<dbReference type="PRO" id="PR:O95714"/>
<dbReference type="Proteomes" id="UP000005640">
    <property type="component" value="Chromosome 15"/>
</dbReference>
<dbReference type="RNAct" id="O95714">
    <property type="molecule type" value="protein"/>
</dbReference>
<dbReference type="Bgee" id="ENSG00000128731">
    <property type="expression patterns" value="Expressed in sural nerve and 96 other cell types or tissues"/>
</dbReference>
<dbReference type="ExpressionAtlas" id="O95714">
    <property type="expression patterns" value="baseline and differential"/>
</dbReference>
<dbReference type="GO" id="GO:0005814">
    <property type="term" value="C:centriole"/>
    <property type="evidence" value="ECO:0007669"/>
    <property type="project" value="UniProtKB-SubCell"/>
</dbReference>
<dbReference type="GO" id="GO:0005737">
    <property type="term" value="C:cytoplasm"/>
    <property type="evidence" value="ECO:0000314"/>
    <property type="project" value="UniProtKB"/>
</dbReference>
<dbReference type="GO" id="GO:0005829">
    <property type="term" value="C:cytosol"/>
    <property type="evidence" value="ECO:0000314"/>
    <property type="project" value="HPA"/>
</dbReference>
<dbReference type="GO" id="GO:0016020">
    <property type="term" value="C:membrane"/>
    <property type="evidence" value="ECO:0007005"/>
    <property type="project" value="UniProtKB"/>
</dbReference>
<dbReference type="GO" id="GO:0005654">
    <property type="term" value="C:nucleoplasm"/>
    <property type="evidence" value="ECO:0000304"/>
    <property type="project" value="Reactome"/>
</dbReference>
<dbReference type="GO" id="GO:0005634">
    <property type="term" value="C:nucleus"/>
    <property type="evidence" value="ECO:0000314"/>
    <property type="project" value="UniProtKB"/>
</dbReference>
<dbReference type="GO" id="GO:0005886">
    <property type="term" value="C:plasma membrane"/>
    <property type="evidence" value="ECO:0000314"/>
    <property type="project" value="HPA"/>
</dbReference>
<dbReference type="GO" id="GO:0005085">
    <property type="term" value="F:guanyl-nucleotide exchange factor activity"/>
    <property type="evidence" value="ECO:0000303"/>
    <property type="project" value="UniProtKB"/>
</dbReference>
<dbReference type="GO" id="GO:0032183">
    <property type="term" value="F:SUMO binding"/>
    <property type="evidence" value="ECO:0000314"/>
    <property type="project" value="UniProtKB"/>
</dbReference>
<dbReference type="GO" id="GO:0061630">
    <property type="term" value="F:ubiquitin protein ligase activity"/>
    <property type="evidence" value="ECO:0000314"/>
    <property type="project" value="UniProtKB"/>
</dbReference>
<dbReference type="GO" id="GO:0031625">
    <property type="term" value="F:ubiquitin protein ligase binding"/>
    <property type="evidence" value="ECO:0000353"/>
    <property type="project" value="UniProtKB"/>
</dbReference>
<dbReference type="GO" id="GO:0008270">
    <property type="term" value="F:zinc ion binding"/>
    <property type="evidence" value="ECO:0007669"/>
    <property type="project" value="UniProtKB-KW"/>
</dbReference>
<dbReference type="GO" id="GO:0006974">
    <property type="term" value="P:DNA damage response"/>
    <property type="evidence" value="ECO:0000314"/>
    <property type="project" value="UniProtKB"/>
</dbReference>
<dbReference type="GO" id="GO:0006281">
    <property type="term" value="P:DNA repair"/>
    <property type="evidence" value="ECO:0007669"/>
    <property type="project" value="UniProtKB-KW"/>
</dbReference>
<dbReference type="GO" id="GO:0006886">
    <property type="term" value="P:intracellular protein transport"/>
    <property type="evidence" value="ECO:0000303"/>
    <property type="project" value="UniProtKB"/>
</dbReference>
<dbReference type="GO" id="GO:0045746">
    <property type="term" value="P:negative regulation of Notch signaling pathway"/>
    <property type="evidence" value="ECO:0007669"/>
    <property type="project" value="Ensembl"/>
</dbReference>
<dbReference type="GO" id="GO:0030182">
    <property type="term" value="P:neuron differentiation"/>
    <property type="evidence" value="ECO:0007669"/>
    <property type="project" value="Ensembl"/>
</dbReference>
<dbReference type="GO" id="GO:0043161">
    <property type="term" value="P:proteasome-mediated ubiquitin-dependent protein catabolic process"/>
    <property type="evidence" value="ECO:0007669"/>
    <property type="project" value="Ensembl"/>
</dbReference>
<dbReference type="GO" id="GO:0016567">
    <property type="term" value="P:protein ubiquitination"/>
    <property type="evidence" value="ECO:0000314"/>
    <property type="project" value="UniProtKB"/>
</dbReference>
<dbReference type="GO" id="GO:0007283">
    <property type="term" value="P:spermatogenesis"/>
    <property type="evidence" value="ECO:0007669"/>
    <property type="project" value="Ensembl"/>
</dbReference>
<dbReference type="CDD" id="cd08664">
    <property type="entry name" value="APC10-HERC2"/>
    <property type="match status" value="1"/>
</dbReference>
<dbReference type="CDD" id="cd00078">
    <property type="entry name" value="HECTc"/>
    <property type="match status" value="1"/>
</dbReference>
<dbReference type="CDD" id="cd14402">
    <property type="entry name" value="UBA_HERC2"/>
    <property type="match status" value="1"/>
</dbReference>
<dbReference type="CDD" id="cd02344">
    <property type="entry name" value="ZZ_HERC2"/>
    <property type="match status" value="1"/>
</dbReference>
<dbReference type="FunFam" id="2.30.30.30:FF:000015">
    <property type="entry name" value="E3 ubiquitin-protein ligase HERC2"/>
    <property type="match status" value="1"/>
</dbReference>
<dbReference type="FunFam" id="2.130.10.30:FF:000003">
    <property type="entry name" value="E3 ubiquitin-protein ligase HERC2 isoform X1"/>
    <property type="match status" value="1"/>
</dbReference>
<dbReference type="FunFam" id="2.130.10.30:FF:000006">
    <property type="entry name" value="E3 ubiquitin-protein ligase HERC2 isoform X1"/>
    <property type="match status" value="1"/>
</dbReference>
<dbReference type="FunFam" id="2.30.30.40:FF:000074">
    <property type="entry name" value="E3 ubiquitin-protein ligase HERC2 isoform X1"/>
    <property type="match status" value="1"/>
</dbReference>
<dbReference type="FunFam" id="2.130.10.30:FF:000004">
    <property type="entry name" value="E3 ubiquitin-protein ligase HERC2 isoform X2"/>
    <property type="match status" value="1"/>
</dbReference>
<dbReference type="FunFam" id="2.60.120.260:FF:000033">
    <property type="entry name" value="E3 ubiquitin-protein ligase HERC2 isoform X2"/>
    <property type="match status" value="1"/>
</dbReference>
<dbReference type="FunFam" id="3.10.120.10:FF:000005">
    <property type="entry name" value="E3 ubiquitin-protein ligase HERC2 isoform X2"/>
    <property type="match status" value="1"/>
</dbReference>
<dbReference type="FunFam" id="3.30.2160.10:FF:000010">
    <property type="entry name" value="E3 ubiquitin-protein ligase HERC2 isoform X2"/>
    <property type="match status" value="1"/>
</dbReference>
<dbReference type="FunFam" id="3.30.60.90:FF:000006">
    <property type="entry name" value="E3 ubiquitin-protein ligase HERC2 isoform X2"/>
    <property type="match status" value="1"/>
</dbReference>
<dbReference type="FunFam" id="3.30.2410.10:FF:000006">
    <property type="entry name" value="probable E3 ubiquitin-protein ligase HERC1 isoform X2"/>
    <property type="match status" value="1"/>
</dbReference>
<dbReference type="Gene3D" id="2.30.30.30">
    <property type="match status" value="1"/>
</dbReference>
<dbReference type="Gene3D" id="3.30.60.90">
    <property type="match status" value="1"/>
</dbReference>
<dbReference type="Gene3D" id="3.10.120.10">
    <property type="entry name" value="Cytochrome b5-like heme/steroid binding domain"/>
    <property type="match status" value="1"/>
</dbReference>
<dbReference type="Gene3D" id="2.60.120.260">
    <property type="entry name" value="Galactose-binding domain-like"/>
    <property type="match status" value="1"/>
</dbReference>
<dbReference type="Gene3D" id="3.30.2160.10">
    <property type="entry name" value="Hect, E3 ligase catalytic domain"/>
    <property type="match status" value="1"/>
</dbReference>
<dbReference type="Gene3D" id="3.30.2410.10">
    <property type="entry name" value="Hect, E3 ligase catalytic domain"/>
    <property type="match status" value="1"/>
</dbReference>
<dbReference type="Gene3D" id="3.90.1750.10">
    <property type="entry name" value="Hect, E3 ligase catalytic domains"/>
    <property type="match status" value="1"/>
</dbReference>
<dbReference type="Gene3D" id="2.130.10.30">
    <property type="entry name" value="Regulator of chromosome condensation 1/beta-lactamase-inhibitor protein II"/>
    <property type="match status" value="3"/>
</dbReference>
<dbReference type="Gene3D" id="2.30.30.40">
    <property type="entry name" value="SH3 Domains"/>
    <property type="match status" value="1"/>
</dbReference>
<dbReference type="InterPro" id="IPR004939">
    <property type="entry name" value="APC_su10/DOC_dom"/>
</dbReference>
<dbReference type="InterPro" id="IPR006624">
    <property type="entry name" value="Beta-propeller_rpt_TECPR"/>
</dbReference>
<dbReference type="InterPro" id="IPR021097">
    <property type="entry name" value="CPH_domain"/>
</dbReference>
<dbReference type="InterPro" id="IPR001199">
    <property type="entry name" value="Cyt_B5-like_heme/steroid-bd"/>
</dbReference>
<dbReference type="InterPro" id="IPR036400">
    <property type="entry name" value="Cyt_B5-like_heme/steroid_sf"/>
</dbReference>
<dbReference type="InterPro" id="IPR008979">
    <property type="entry name" value="Galactose-bd-like_sf"/>
</dbReference>
<dbReference type="InterPro" id="IPR000569">
    <property type="entry name" value="HECT_dom"/>
</dbReference>
<dbReference type="InterPro" id="IPR035983">
    <property type="entry name" value="Hect_E3_ubiquitin_ligase"/>
</dbReference>
<dbReference type="InterPro" id="IPR037976">
    <property type="entry name" value="HERC2_APC10"/>
</dbReference>
<dbReference type="InterPro" id="IPR010606">
    <property type="entry name" value="Mib_Herc2"/>
</dbReference>
<dbReference type="InterPro" id="IPR037252">
    <property type="entry name" value="Mib_Herc2_sf"/>
</dbReference>
<dbReference type="InterPro" id="IPR009091">
    <property type="entry name" value="RCC1/BLIP-II"/>
</dbReference>
<dbReference type="InterPro" id="IPR000408">
    <property type="entry name" value="Reg_chr_condens"/>
</dbReference>
<dbReference type="InterPro" id="IPR014722">
    <property type="entry name" value="Rib_uL2_dom2"/>
</dbReference>
<dbReference type="InterPro" id="IPR051625">
    <property type="entry name" value="Signaling_Regulatory_Domain"/>
</dbReference>
<dbReference type="InterPro" id="IPR000433">
    <property type="entry name" value="Znf_ZZ"/>
</dbReference>
<dbReference type="InterPro" id="IPR043145">
    <property type="entry name" value="Znf_ZZ_sf"/>
</dbReference>
<dbReference type="InterPro" id="IPR041987">
    <property type="entry name" value="ZZ_HERC2"/>
</dbReference>
<dbReference type="PANTHER" id="PTHR22872">
    <property type="entry name" value="BTK-BINDING PROTEIN-RELATED"/>
    <property type="match status" value="1"/>
</dbReference>
<dbReference type="PANTHER" id="PTHR22872:SF2">
    <property type="entry name" value="INHIBITOR OF BRUTON TYROSINE KINASE"/>
    <property type="match status" value="1"/>
</dbReference>
<dbReference type="Pfam" id="PF03256">
    <property type="entry name" value="ANAPC10"/>
    <property type="match status" value="1"/>
</dbReference>
<dbReference type="Pfam" id="PF11515">
    <property type="entry name" value="Cul7"/>
    <property type="match status" value="1"/>
</dbReference>
<dbReference type="Pfam" id="PF00173">
    <property type="entry name" value="Cyt-b5"/>
    <property type="match status" value="1"/>
</dbReference>
<dbReference type="Pfam" id="PF00632">
    <property type="entry name" value="HECT"/>
    <property type="match status" value="1"/>
</dbReference>
<dbReference type="Pfam" id="PF06701">
    <property type="entry name" value="MIB_HERC2"/>
    <property type="match status" value="1"/>
</dbReference>
<dbReference type="Pfam" id="PF00415">
    <property type="entry name" value="RCC1"/>
    <property type="match status" value="7"/>
</dbReference>
<dbReference type="Pfam" id="PF25390">
    <property type="entry name" value="WD40_RLD"/>
    <property type="match status" value="2"/>
</dbReference>
<dbReference type="Pfam" id="PF00569">
    <property type="entry name" value="ZZ"/>
    <property type="match status" value="1"/>
</dbReference>
<dbReference type="PRINTS" id="PR00633">
    <property type="entry name" value="RCCNDNSATION"/>
</dbReference>
<dbReference type="SMART" id="SM01337">
    <property type="entry name" value="APC10"/>
    <property type="match status" value="1"/>
</dbReference>
<dbReference type="SMART" id="SM01117">
    <property type="entry name" value="Cyt-b5"/>
    <property type="match status" value="1"/>
</dbReference>
<dbReference type="SMART" id="SM00119">
    <property type="entry name" value="HECTc"/>
    <property type="match status" value="1"/>
</dbReference>
<dbReference type="SMART" id="SM00706">
    <property type="entry name" value="TECPR"/>
    <property type="match status" value="5"/>
</dbReference>
<dbReference type="SMART" id="SM00291">
    <property type="entry name" value="ZnF_ZZ"/>
    <property type="match status" value="1"/>
</dbReference>
<dbReference type="SUPFAM" id="SSF55856">
    <property type="entry name" value="Cytochrome b5-like heme/steroid binding domain"/>
    <property type="match status" value="1"/>
</dbReference>
<dbReference type="SUPFAM" id="SSF49785">
    <property type="entry name" value="Galactose-binding domain-like"/>
    <property type="match status" value="1"/>
</dbReference>
<dbReference type="SUPFAM" id="SSF56204">
    <property type="entry name" value="Hect, E3 ligase catalytic domain"/>
    <property type="match status" value="1"/>
</dbReference>
<dbReference type="SUPFAM" id="SSF159034">
    <property type="entry name" value="Mib/herc2 domain-like"/>
    <property type="match status" value="1"/>
</dbReference>
<dbReference type="SUPFAM" id="SSF50985">
    <property type="entry name" value="RCC1/BLIP-II"/>
    <property type="match status" value="3"/>
</dbReference>
<dbReference type="SUPFAM" id="SSF63748">
    <property type="entry name" value="Tudor/PWWP/MBT"/>
    <property type="match status" value="1"/>
</dbReference>
<dbReference type="PROSITE" id="PS50255">
    <property type="entry name" value="CYTOCHROME_B5_2"/>
    <property type="match status" value="1"/>
</dbReference>
<dbReference type="PROSITE" id="PS51284">
    <property type="entry name" value="DOC"/>
    <property type="match status" value="1"/>
</dbReference>
<dbReference type="PROSITE" id="PS50237">
    <property type="entry name" value="HECT"/>
    <property type="match status" value="1"/>
</dbReference>
<dbReference type="PROSITE" id="PS51416">
    <property type="entry name" value="MIB_HERC2"/>
    <property type="match status" value="1"/>
</dbReference>
<dbReference type="PROSITE" id="PS00626">
    <property type="entry name" value="RCC1_2"/>
    <property type="match status" value="1"/>
</dbReference>
<dbReference type="PROSITE" id="PS50012">
    <property type="entry name" value="RCC1_3"/>
    <property type="match status" value="18"/>
</dbReference>
<dbReference type="PROSITE" id="PS01357">
    <property type="entry name" value="ZF_ZZ_1"/>
    <property type="match status" value="1"/>
</dbReference>
<dbReference type="PROSITE" id="PS50135">
    <property type="entry name" value="ZF_ZZ_2"/>
    <property type="match status" value="1"/>
</dbReference>
<accession>O95714</accession>
<accession>Q86SV7</accession>
<accession>Q86SV8</accession>
<accession>Q86SV9</accession>
<accession>Q86YY3</accession>
<accession>Q86YY4</accession>
<accession>Q86YY5</accession>
<accession>Q86YY6</accession>
<accession>Q86YY7</accession>
<accession>Q86YY8</accession>
<accession>Q86YY9</accession>
<accession>Q86YZ0</accession>
<accession>Q86YZ1</accession>
<proteinExistence type="evidence at protein level"/>
<feature type="chain" id="PRO_0000229739" description="E3 ubiquitin-protein ligase HERC2">
    <location>
        <begin position="1"/>
        <end position="4834"/>
    </location>
</feature>
<feature type="repeat" description="RCC1 1-1" evidence="5 21">
    <location>
        <begin position="415"/>
        <end position="461"/>
    </location>
</feature>
<feature type="repeat" description="RCC1 1-2" evidence="5 21">
    <location>
        <begin position="462"/>
        <end position="512"/>
    </location>
</feature>
<feature type="repeat" description="RCC1 1-3" evidence="5 21">
    <location>
        <begin position="513"/>
        <end position="568"/>
    </location>
</feature>
<feature type="repeat" description="RCC1 1-4" evidence="5 21">
    <location>
        <begin position="569"/>
        <end position="620"/>
    </location>
</feature>
<feature type="repeat" description="RCC1 1-5" evidence="5 21">
    <location>
        <begin position="623"/>
        <end position="674"/>
    </location>
</feature>
<feature type="repeat" description="RCC1 1-6" evidence="5 21">
    <location>
        <begin position="675"/>
        <end position="726"/>
    </location>
</feature>
<feature type="repeat" description="RCC1 1-7" evidence="5 21">
    <location>
        <begin position="728"/>
        <end position="778"/>
    </location>
</feature>
<feature type="domain" description="Cytochrome b5 heme-binding" evidence="6">
    <location>
        <begin position="1207"/>
        <end position="1283"/>
    </location>
</feature>
<feature type="domain" description="MIB/HERC2" evidence="8">
    <location>
        <begin position="1859"/>
        <end position="1932"/>
    </location>
</feature>
<feature type="domain" description="CPH" evidence="2">
    <location>
        <begin position="2554"/>
        <end position="2630"/>
    </location>
</feature>
<feature type="domain" description="DOC" evidence="7">
    <location>
        <begin position="2759"/>
        <end position="2936"/>
    </location>
</feature>
<feature type="repeat" description="RCC1 2-1" evidence="5 21">
    <location>
        <begin position="2958"/>
        <end position="3009"/>
    </location>
</feature>
<feature type="repeat" description="RCC1 2-2" evidence="5 21">
    <location>
        <begin position="3010"/>
        <end position="3064"/>
    </location>
</feature>
<feature type="repeat" description="RCC1 2-3" evidence="5 21">
    <location>
        <begin position="3065"/>
        <end position="3116"/>
    </location>
</feature>
<feature type="repeat" description="RCC1 2-4" evidence="5 21">
    <location>
        <begin position="3118"/>
        <end position="3168"/>
    </location>
</feature>
<feature type="repeat" description="RCC1 2-5" evidence="5 21">
    <location>
        <begin position="3171"/>
        <end position="3222"/>
    </location>
</feature>
<feature type="repeat" description="RCC1 2-6" evidence="5 21">
    <location>
        <begin position="3224"/>
        <end position="3274"/>
    </location>
</feature>
<feature type="repeat" description="RCC1 2-7" evidence="5 21">
    <location>
        <begin position="3275"/>
        <end position="3326"/>
    </location>
</feature>
<feature type="repeat" description="RCC1 3-1" evidence="5 21">
    <location>
        <begin position="3951"/>
        <end position="4002"/>
    </location>
</feature>
<feature type="repeat" description="RCC1 3-2" evidence="5 21">
    <location>
        <begin position="4004"/>
        <end position="4056"/>
    </location>
</feature>
<feature type="repeat" description="RCC1 3-3" evidence="5 21">
    <location>
        <begin position="4058"/>
        <end position="4108"/>
    </location>
</feature>
<feature type="repeat" description="RCC1 3-4" evidence="5 21">
    <location>
        <begin position="4110"/>
        <end position="4162"/>
    </location>
</feature>
<feature type="repeat" description="RCC1 3-5" evidence="5 21">
    <location>
        <begin position="4164"/>
        <end position="4214"/>
    </location>
</feature>
<feature type="repeat" description="RCC1 3-6" evidence="5 21">
    <location>
        <begin position="4216"/>
        <end position="4266"/>
    </location>
</feature>
<feature type="repeat" description="RCC1 3-7" evidence="5 21">
    <location>
        <begin position="4268"/>
        <end position="4318"/>
    </location>
</feature>
<feature type="domain" description="HECT" evidence="3">
    <location>
        <begin position="4457"/>
        <end position="4794"/>
    </location>
</feature>
<feature type="zinc finger region" description="ZZ-type" evidence="4">
    <location>
        <begin position="2703"/>
        <end position="2755"/>
    </location>
</feature>
<feature type="region of interest" description="Disordered" evidence="9">
    <location>
        <begin position="50"/>
        <end position="88"/>
    </location>
</feature>
<feature type="region of interest" description="Disordered" evidence="9">
    <location>
        <begin position="1555"/>
        <end position="1575"/>
    </location>
</feature>
<feature type="region of interest" description="Disordered" evidence="9">
    <location>
        <begin position="1933"/>
        <end position="1958"/>
    </location>
</feature>
<feature type="region of interest" description="Disordered" evidence="9">
    <location>
        <begin position="3602"/>
        <end position="3629"/>
    </location>
</feature>
<feature type="region of interest" description="Disordered" evidence="9">
    <location>
        <begin position="4804"/>
        <end position="4834"/>
    </location>
</feature>
<feature type="coiled-coil region" evidence="2">
    <location>
        <begin position="948"/>
        <end position="980"/>
    </location>
</feature>
<feature type="compositionally biased region" description="Basic and acidic residues" evidence="9">
    <location>
        <begin position="59"/>
        <end position="84"/>
    </location>
</feature>
<feature type="compositionally biased region" description="Acidic residues" evidence="9">
    <location>
        <begin position="1566"/>
        <end position="1575"/>
    </location>
</feature>
<feature type="compositionally biased region" description="Acidic residues" evidence="9">
    <location>
        <begin position="1940"/>
        <end position="1951"/>
    </location>
</feature>
<feature type="compositionally biased region" description="Polar residues" evidence="9">
    <location>
        <begin position="3602"/>
        <end position="3611"/>
    </location>
</feature>
<feature type="compositionally biased region" description="Polar residues" evidence="9">
    <location>
        <begin position="3618"/>
        <end position="3629"/>
    </location>
</feature>
<feature type="compositionally biased region" description="Acidic residues" evidence="9">
    <location>
        <begin position="4806"/>
        <end position="4820"/>
    </location>
</feature>
<feature type="compositionally biased region" description="Polar residues" evidence="9">
    <location>
        <begin position="4823"/>
        <end position="4834"/>
    </location>
</feature>
<feature type="active site" description="Glycyl thioester intermediate" evidence="3">
    <location>
        <position position="4762"/>
    </location>
</feature>
<feature type="binding site" evidence="4">
    <location>
        <position position="2708"/>
    </location>
    <ligand>
        <name>Zn(2+)</name>
        <dbReference type="ChEBI" id="CHEBI:29105"/>
        <label>1</label>
    </ligand>
</feature>
<feature type="binding site" evidence="4">
    <location>
        <position position="2711"/>
    </location>
    <ligand>
        <name>Zn(2+)</name>
        <dbReference type="ChEBI" id="CHEBI:29105"/>
        <label>1</label>
    </ligand>
</feature>
<feature type="binding site" evidence="4">
    <location>
        <position position="2723"/>
    </location>
    <ligand>
        <name>Zn(2+)</name>
        <dbReference type="ChEBI" id="CHEBI:29105"/>
        <label>2</label>
    </ligand>
</feature>
<feature type="binding site" evidence="4">
    <location>
        <position position="2726"/>
    </location>
    <ligand>
        <name>Zn(2+)</name>
        <dbReference type="ChEBI" id="CHEBI:29105"/>
        <label>2</label>
    </ligand>
</feature>
<feature type="binding site" evidence="4">
    <location>
        <position position="2732"/>
    </location>
    <ligand>
        <name>Zn(2+)</name>
        <dbReference type="ChEBI" id="CHEBI:29105"/>
        <label>1</label>
    </ligand>
</feature>
<feature type="binding site" evidence="4">
    <location>
        <position position="2735"/>
    </location>
    <ligand>
        <name>Zn(2+)</name>
        <dbReference type="ChEBI" id="CHEBI:29105"/>
        <label>1</label>
    </ligand>
</feature>
<feature type="binding site" evidence="4">
    <location>
        <position position="2741"/>
    </location>
    <ligand>
        <name>Zn(2+)</name>
        <dbReference type="ChEBI" id="CHEBI:29105"/>
        <label>2</label>
    </ligand>
</feature>
<feature type="binding site" evidence="4">
    <location>
        <position position="2745"/>
    </location>
    <ligand>
        <name>Zn(2+)</name>
        <dbReference type="ChEBI" id="CHEBI:29105"/>
        <label>2</label>
    </ligand>
</feature>
<feature type="modified residue" description="Phosphothreonine" evidence="30">
    <location>
        <position position="272"/>
    </location>
</feature>
<feature type="modified residue" description="Phosphothreonine" evidence="29">
    <location>
        <position position="647"/>
    </location>
</feature>
<feature type="modified residue" description="Phosphoserine" evidence="1">
    <location>
        <position position="1577"/>
    </location>
</feature>
<feature type="modified residue" description="Phosphoserine" evidence="1">
    <location>
        <position position="1942"/>
    </location>
</feature>
<feature type="modified residue" description="Phosphothreonine" evidence="29">
    <location>
        <position position="1944"/>
    </location>
</feature>
<feature type="modified residue" description="Phosphoserine" evidence="25 27 28 30">
    <location>
        <position position="2454"/>
    </location>
</feature>
<feature type="modified residue" description="Phosphoserine" evidence="25 26 28 29 30">
    <location>
        <position position="2928"/>
    </location>
</feature>
<feature type="modified residue" description="Phosphoserine" evidence="26">
    <location>
        <position position="4810"/>
    </location>
</feature>
<feature type="modified residue" description="Phosphoserine" evidence="26">
    <location>
        <position position="4811"/>
    </location>
</feature>
<feature type="modified residue" description="Phosphoserine" evidence="26">
    <location>
        <position position="4814"/>
    </location>
</feature>
<feature type="modified residue" description="Phosphothreonine" evidence="13">
    <location>
        <position position="4827"/>
    </location>
</feature>
<feature type="sequence variant" id="VAR_069282" description="In MRT38; decreased protein abundance in transfected cells; dbSNP:rs397518474." evidence="18">
    <original>P</original>
    <variation>L</variation>
    <location>
        <position position="594"/>
    </location>
</feature>
<feature type="mutagenesis site" description="Abolishes binding to SUMO; when associated with S-2711." evidence="17">
    <original>C</original>
    <variation>S</variation>
    <location>
        <position position="2708"/>
    </location>
</feature>
<feature type="mutagenesis site" description="Abolishes binding to SUMO; when associated with S-2708." evidence="17">
    <original>C</original>
    <variation>S</variation>
    <location>
        <position position="2711"/>
    </location>
</feature>
<feature type="mutagenesis site" description="Prevents HERC2 C-terminal fragment binding to endogenous RNF8." evidence="13">
    <original>T</original>
    <variation>A</variation>
    <location>
        <position position="4827"/>
    </location>
</feature>
<feature type="sequence conflict" description="In Ref. 1; AAD08657." evidence="22" ref="1">
    <original>L</original>
    <variation>W</variation>
    <location>
        <position position="1053"/>
    </location>
</feature>
<feature type="sequence conflict" description="In Ref. 1; AAD08657." evidence="22" ref="1">
    <original>G</original>
    <variation>D</variation>
    <location>
        <position position="1150"/>
    </location>
</feature>
<feature type="sequence conflict" description="In Ref. 1; AAD08657." evidence="22" ref="1">
    <original>S</original>
    <variation>R</variation>
    <location>
        <position position="1354"/>
    </location>
</feature>
<feature type="sequence conflict" description="In Ref. 1; AAD08657." evidence="22" ref="1">
    <original>T</original>
    <variation>M</variation>
    <location>
        <position position="1566"/>
    </location>
</feature>
<feature type="sequence conflict" description="In Ref. 1; AAD08657." evidence="22" ref="1">
    <original>K</original>
    <variation>T</variation>
    <location>
        <position position="1753"/>
    </location>
</feature>
<feature type="sequence conflict" description="In Ref. 1; AAD08657." evidence="22" ref="1">
    <original>R</original>
    <variation>H</variation>
    <location>
        <position position="2444"/>
    </location>
</feature>
<feature type="sequence conflict" description="In Ref. 1; AAD08657." evidence="22" ref="1">
    <original>C</original>
    <variation>Y</variation>
    <location>
        <position position="2881"/>
    </location>
</feature>
<feature type="sequence conflict" description="In Ref. 3; AAO27475." evidence="22" ref="3">
    <original>S</original>
    <variation>W</variation>
    <location>
        <position position="3070"/>
    </location>
</feature>
<feature type="sequence conflict" description="In Ref. 3; AAO27476." evidence="22" ref="3">
    <original>P</original>
    <variation>R</variation>
    <location>
        <position position="3346"/>
    </location>
</feature>
<feature type="sequence conflict" description="In Ref. 3; AAO27480." evidence="22" ref="3">
    <original>VA</original>
    <variation>MP</variation>
    <location>
        <begin position="3583"/>
        <end position="3584"/>
    </location>
</feature>
<feature type="sequence conflict" description="In Ref. 3; AAO27480." evidence="22" ref="3">
    <original>D</original>
    <variation>N</variation>
    <location>
        <position position="3597"/>
    </location>
</feature>
<feature type="sequence conflict" description="In Ref. 3; AAO27481." evidence="22" ref="3">
    <original>F</original>
    <variation>S</variation>
    <location>
        <position position="3808"/>
    </location>
</feature>
<feature type="strand" evidence="33">
    <location>
        <begin position="425"/>
        <end position="430"/>
    </location>
</feature>
<feature type="turn" evidence="33">
    <location>
        <begin position="436"/>
        <end position="438"/>
    </location>
</feature>
<feature type="helix" evidence="33">
    <location>
        <begin position="446"/>
        <end position="449"/>
    </location>
</feature>
<feature type="strand" evidence="33">
    <location>
        <begin position="453"/>
        <end position="458"/>
    </location>
</feature>
<feature type="strand" evidence="33">
    <location>
        <begin position="460"/>
        <end position="467"/>
    </location>
</feature>
<feature type="strand" evidence="33">
    <location>
        <begin position="472"/>
        <end position="476"/>
    </location>
</feature>
<feature type="strand" evidence="33">
    <location>
        <begin position="495"/>
        <end position="499"/>
    </location>
</feature>
<feature type="strand" evidence="33">
    <location>
        <begin position="505"/>
        <end position="511"/>
    </location>
</feature>
<feature type="strand" evidence="33">
    <location>
        <begin position="516"/>
        <end position="520"/>
    </location>
</feature>
<feature type="helix" evidence="33">
    <location>
        <begin position="523"/>
        <end position="525"/>
    </location>
</feature>
<feature type="strand" evidence="33">
    <location>
        <begin position="528"/>
        <end position="531"/>
    </location>
</feature>
<feature type="strand" evidence="33">
    <location>
        <begin position="535"/>
        <end position="540"/>
    </location>
</feature>
<feature type="helix" evidence="33">
    <location>
        <begin position="542"/>
        <end position="544"/>
    </location>
</feature>
<feature type="helix" evidence="33">
    <location>
        <begin position="549"/>
        <end position="551"/>
    </location>
</feature>
<feature type="strand" evidence="33">
    <location>
        <begin position="552"/>
        <end position="558"/>
    </location>
</feature>
<feature type="strand" evidence="33">
    <location>
        <begin position="560"/>
        <end position="567"/>
    </location>
</feature>
<feature type="strand" evidence="33">
    <location>
        <begin position="572"/>
        <end position="576"/>
    </location>
</feature>
<feature type="helix" evidence="33">
    <location>
        <begin position="579"/>
        <end position="581"/>
    </location>
</feature>
<feature type="strand" evidence="33">
    <location>
        <begin position="585"/>
        <end position="587"/>
    </location>
</feature>
<feature type="strand" evidence="33">
    <location>
        <begin position="591"/>
        <end position="596"/>
    </location>
</feature>
<feature type="helix" evidence="33">
    <location>
        <begin position="598"/>
        <end position="600"/>
    </location>
</feature>
<feature type="strand" evidence="33">
    <location>
        <begin position="605"/>
        <end position="610"/>
    </location>
</feature>
<feature type="strand" evidence="33">
    <location>
        <begin position="616"/>
        <end position="621"/>
    </location>
</feature>
<feature type="strand" evidence="33">
    <location>
        <begin position="626"/>
        <end position="630"/>
    </location>
</feature>
<feature type="helix" evidence="33">
    <location>
        <begin position="633"/>
        <end position="635"/>
    </location>
</feature>
<feature type="strand" evidence="33">
    <location>
        <begin position="638"/>
        <end position="642"/>
    </location>
</feature>
<feature type="strand" evidence="33">
    <location>
        <begin position="645"/>
        <end position="650"/>
    </location>
</feature>
<feature type="helix" evidence="33">
    <location>
        <begin position="652"/>
        <end position="654"/>
    </location>
</feature>
<feature type="strand" evidence="33">
    <location>
        <begin position="659"/>
        <end position="665"/>
    </location>
</feature>
<feature type="strand" evidence="33">
    <location>
        <begin position="668"/>
        <end position="673"/>
    </location>
</feature>
<feature type="strand" evidence="33">
    <location>
        <begin position="678"/>
        <end position="682"/>
    </location>
</feature>
<feature type="helix" evidence="33">
    <location>
        <begin position="685"/>
        <end position="687"/>
    </location>
</feature>
<feature type="strand" evidence="33">
    <location>
        <begin position="691"/>
        <end position="693"/>
    </location>
</feature>
<feature type="strand" evidence="33">
    <location>
        <begin position="697"/>
        <end position="702"/>
    </location>
</feature>
<feature type="helix" evidence="33">
    <location>
        <begin position="704"/>
        <end position="706"/>
    </location>
</feature>
<feature type="strand" evidence="33">
    <location>
        <begin position="711"/>
        <end position="716"/>
    </location>
</feature>
<feature type="strand" evidence="33">
    <location>
        <begin position="718"/>
        <end position="725"/>
    </location>
</feature>
<feature type="strand" evidence="33">
    <location>
        <begin position="730"/>
        <end position="735"/>
    </location>
</feature>
<feature type="strand" evidence="33">
    <location>
        <begin position="746"/>
        <end position="754"/>
    </location>
</feature>
<feature type="strand" evidence="33">
    <location>
        <begin position="763"/>
        <end position="768"/>
    </location>
</feature>
<feature type="strand" evidence="33">
    <location>
        <begin position="770"/>
        <end position="777"/>
    </location>
</feature>
<feature type="turn" evidence="33">
    <location>
        <begin position="781"/>
        <end position="783"/>
    </location>
</feature>
<feature type="helix" evidence="31">
    <location>
        <begin position="1212"/>
        <end position="1221"/>
    </location>
</feature>
<feature type="strand" evidence="31">
    <location>
        <begin position="1225"/>
        <end position="1228"/>
    </location>
</feature>
<feature type="strand" evidence="31">
    <location>
        <begin position="1231"/>
        <end position="1234"/>
    </location>
</feature>
<feature type="helix" evidence="31">
    <location>
        <begin position="1235"/>
        <end position="1242"/>
    </location>
</feature>
<feature type="helix" evidence="31">
    <location>
        <begin position="1250"/>
        <end position="1252"/>
    </location>
</feature>
<feature type="helix" evidence="31">
    <location>
        <begin position="1257"/>
        <end position="1266"/>
    </location>
</feature>
<feature type="helix" evidence="31">
    <location>
        <begin position="1270"/>
        <end position="1273"/>
    </location>
</feature>
<feature type="helix" evidence="31">
    <location>
        <begin position="1274"/>
        <end position="1277"/>
    </location>
</feature>
<feature type="strand" evidence="31">
    <location>
        <begin position="1278"/>
        <end position="1282"/>
    </location>
</feature>
<feature type="helix" evidence="31">
    <location>
        <begin position="1285"/>
        <end position="1288"/>
    </location>
</feature>
<feature type="turn" evidence="34">
    <location>
        <begin position="2709"/>
        <end position="2711"/>
    </location>
</feature>
<feature type="strand" evidence="34">
    <location>
        <begin position="2714"/>
        <end position="2718"/>
    </location>
</feature>
<feature type="strand" evidence="34">
    <location>
        <begin position="2720"/>
        <end position="2728"/>
    </location>
</feature>
<feature type="helix" evidence="34">
    <location>
        <begin position="2733"/>
        <end position="2738"/>
    </location>
</feature>
<feature type="strand" evidence="34">
    <location>
        <begin position="2747"/>
        <end position="2752"/>
    </location>
</feature>
<feature type="helix" evidence="37">
    <location>
        <begin position="2782"/>
        <end position="2785"/>
    </location>
</feature>
<feature type="strand" evidence="37">
    <location>
        <begin position="2786"/>
        <end position="2793"/>
    </location>
</feature>
<feature type="helix" evidence="37">
    <location>
        <begin position="2795"/>
        <end position="2799"/>
    </location>
</feature>
<feature type="helix" evidence="37">
    <location>
        <begin position="2800"/>
        <end position="2803"/>
    </location>
</feature>
<feature type="strand" evidence="37">
    <location>
        <begin position="2818"/>
        <end position="2824"/>
    </location>
</feature>
<feature type="strand" evidence="37">
    <location>
        <begin position="2828"/>
        <end position="2836"/>
    </location>
</feature>
<feature type="helix" evidence="37">
    <location>
        <begin position="2839"/>
        <end position="2844"/>
    </location>
</feature>
<feature type="strand" evidence="37">
    <location>
        <begin position="2845"/>
        <end position="2856"/>
    </location>
</feature>
<feature type="strand" evidence="37">
    <location>
        <begin position="2861"/>
        <end position="2867"/>
    </location>
</feature>
<feature type="strand" evidence="37">
    <location>
        <begin position="2873"/>
        <end position="2880"/>
    </location>
</feature>
<feature type="strand" evidence="37">
    <location>
        <begin position="2886"/>
        <end position="2895"/>
    </location>
</feature>
<feature type="helix" evidence="37">
    <location>
        <begin position="2896"/>
        <end position="2898"/>
    </location>
</feature>
<feature type="strand" evidence="37">
    <location>
        <begin position="2906"/>
        <end position="2913"/>
    </location>
</feature>
<feature type="strand" evidence="35">
    <location>
        <begin position="2961"/>
        <end position="2966"/>
    </location>
</feature>
<feature type="strand" evidence="35">
    <location>
        <begin position="2976"/>
        <end position="2985"/>
    </location>
</feature>
<feature type="helix" evidence="35">
    <location>
        <begin position="2987"/>
        <end position="2990"/>
    </location>
</feature>
<feature type="strand" evidence="35">
    <location>
        <begin position="2994"/>
        <end position="3000"/>
    </location>
</feature>
<feature type="strand" evidence="35">
    <location>
        <begin position="3003"/>
        <end position="3008"/>
    </location>
</feature>
<feature type="strand" evidence="35">
    <location>
        <begin position="3013"/>
        <end position="3018"/>
    </location>
</feature>
<feature type="helix" evidence="35">
    <location>
        <begin position="3020"/>
        <end position="3022"/>
    </location>
</feature>
<feature type="strand" evidence="35">
    <location>
        <begin position="3030"/>
        <end position="3038"/>
    </location>
</feature>
<feature type="helix" evidence="35">
    <location>
        <begin position="3040"/>
        <end position="3042"/>
    </location>
</feature>
<feature type="strand" evidence="35">
    <location>
        <begin position="3047"/>
        <end position="3051"/>
    </location>
</feature>
<feature type="strand" evidence="35">
    <location>
        <begin position="3057"/>
        <end position="3063"/>
    </location>
</feature>
<feature type="strand" evidence="35">
    <location>
        <begin position="3068"/>
        <end position="3072"/>
    </location>
</feature>
<feature type="helix" evidence="35">
    <location>
        <begin position="3075"/>
        <end position="3077"/>
    </location>
</feature>
<feature type="strand" evidence="35">
    <location>
        <begin position="3081"/>
        <end position="3083"/>
    </location>
</feature>
<feature type="strand" evidence="35">
    <location>
        <begin position="3087"/>
        <end position="3092"/>
    </location>
</feature>
<feature type="helix" evidence="35">
    <location>
        <begin position="3094"/>
        <end position="3096"/>
    </location>
</feature>
<feature type="strand" evidence="36">
    <location>
        <begin position="3097"/>
        <end position="3099"/>
    </location>
</feature>
<feature type="strand" evidence="35">
    <location>
        <begin position="3101"/>
        <end position="3106"/>
    </location>
</feature>
<feature type="strand" evidence="35">
    <location>
        <begin position="3108"/>
        <end position="3115"/>
    </location>
</feature>
<feature type="strand" evidence="35">
    <location>
        <begin position="3120"/>
        <end position="3124"/>
    </location>
</feature>
<feature type="helix" evidence="35">
    <location>
        <begin position="3127"/>
        <end position="3129"/>
    </location>
</feature>
<feature type="strand" evidence="35">
    <location>
        <begin position="3133"/>
        <end position="3135"/>
    </location>
</feature>
<feature type="strand" evidence="35">
    <location>
        <begin position="3139"/>
        <end position="3144"/>
    </location>
</feature>
<feature type="helix" evidence="35">
    <location>
        <begin position="3146"/>
        <end position="3148"/>
    </location>
</feature>
<feature type="strand" evidence="35">
    <location>
        <begin position="3153"/>
        <end position="3158"/>
    </location>
</feature>
<feature type="strand" evidence="35">
    <location>
        <begin position="3160"/>
        <end position="3162"/>
    </location>
</feature>
<feature type="strand" evidence="35">
    <location>
        <begin position="3164"/>
        <end position="3169"/>
    </location>
</feature>
<feature type="strand" evidence="35">
    <location>
        <begin position="3174"/>
        <end position="3178"/>
    </location>
</feature>
<feature type="helix" evidence="35">
    <location>
        <begin position="3181"/>
        <end position="3183"/>
    </location>
</feature>
<feature type="strand" evidence="35">
    <location>
        <begin position="3186"/>
        <end position="3190"/>
    </location>
</feature>
<feature type="strand" evidence="35">
    <location>
        <begin position="3193"/>
        <end position="3198"/>
    </location>
</feature>
<feature type="helix" evidence="35">
    <location>
        <begin position="3200"/>
        <end position="3202"/>
    </location>
</feature>
<feature type="strand" evidence="35">
    <location>
        <begin position="3207"/>
        <end position="3212"/>
    </location>
</feature>
<feature type="strand" evidence="35">
    <location>
        <begin position="3214"/>
        <end position="3221"/>
    </location>
</feature>
<feature type="strand" evidence="35">
    <location>
        <begin position="3226"/>
        <end position="3230"/>
    </location>
</feature>
<feature type="helix" evidence="35">
    <location>
        <begin position="3233"/>
        <end position="3235"/>
    </location>
</feature>
<feature type="strand" evidence="35">
    <location>
        <begin position="3239"/>
        <end position="3241"/>
    </location>
</feature>
<feature type="strand" evidence="35">
    <location>
        <begin position="3245"/>
        <end position="3250"/>
    </location>
</feature>
<feature type="helix" evidence="35">
    <location>
        <begin position="3252"/>
        <end position="3254"/>
    </location>
</feature>
<feature type="strand" evidence="35">
    <location>
        <begin position="3259"/>
        <end position="3264"/>
    </location>
</feature>
<feature type="strand" evidence="35">
    <location>
        <begin position="3266"/>
        <end position="3273"/>
    </location>
</feature>
<feature type="strand" evidence="35">
    <location>
        <begin position="3278"/>
        <end position="3282"/>
    </location>
</feature>
<feature type="strand" evidence="35">
    <location>
        <begin position="3291"/>
        <end position="3294"/>
    </location>
</feature>
<feature type="strand" evidence="35">
    <location>
        <begin position="3297"/>
        <end position="3302"/>
    </location>
</feature>
<feature type="strand" evidence="35">
    <location>
        <begin position="3313"/>
        <end position="3316"/>
    </location>
</feature>
<feature type="strand" evidence="35">
    <location>
        <begin position="3318"/>
        <end position="3324"/>
    </location>
</feature>
<feature type="strand" evidence="32">
    <location>
        <begin position="3954"/>
        <end position="3959"/>
    </location>
</feature>
<feature type="strand" evidence="32">
    <location>
        <begin position="3971"/>
        <end position="3978"/>
    </location>
</feature>
<feature type="helix" evidence="32">
    <location>
        <begin position="3980"/>
        <end position="3984"/>
    </location>
</feature>
<feature type="strand" evidence="32">
    <location>
        <begin position="3987"/>
        <end position="3993"/>
    </location>
</feature>
<feature type="strand" evidence="32">
    <location>
        <begin position="3996"/>
        <end position="4001"/>
    </location>
</feature>
<feature type="strand" evidence="32">
    <location>
        <begin position="4006"/>
        <end position="4010"/>
    </location>
</feature>
<feature type="helix" evidence="32">
    <location>
        <begin position="4013"/>
        <end position="4015"/>
    </location>
</feature>
<feature type="strand" evidence="32">
    <location>
        <begin position="4018"/>
        <end position="4022"/>
    </location>
</feature>
<feature type="strand" evidence="32">
    <location>
        <begin position="4025"/>
        <end position="4030"/>
    </location>
</feature>
<feature type="helix" evidence="32">
    <location>
        <begin position="4032"/>
        <end position="4034"/>
    </location>
</feature>
<feature type="strand" evidence="32">
    <location>
        <begin position="4039"/>
        <end position="4043"/>
    </location>
</feature>
<feature type="strand" evidence="32">
    <location>
        <begin position="4049"/>
        <end position="4055"/>
    </location>
</feature>
<feature type="strand" evidence="32">
    <location>
        <begin position="4060"/>
        <end position="4064"/>
    </location>
</feature>
<feature type="helix" evidence="32">
    <location>
        <begin position="4067"/>
        <end position="4069"/>
    </location>
</feature>
<feature type="strand" evidence="32">
    <location>
        <begin position="4073"/>
        <end position="4075"/>
    </location>
</feature>
<feature type="strand" evidence="32">
    <location>
        <begin position="4079"/>
        <end position="4084"/>
    </location>
</feature>
<feature type="helix" evidence="32">
    <location>
        <begin position="4086"/>
        <end position="4088"/>
    </location>
</feature>
<feature type="strand" evidence="32">
    <location>
        <begin position="4093"/>
        <end position="4098"/>
    </location>
</feature>
<feature type="strand" evidence="32">
    <location>
        <begin position="4100"/>
        <end position="4107"/>
    </location>
</feature>
<feature type="strand" evidence="32">
    <location>
        <begin position="4112"/>
        <end position="4116"/>
    </location>
</feature>
<feature type="helix" evidence="32">
    <location>
        <begin position="4119"/>
        <end position="4121"/>
    </location>
</feature>
<feature type="strand" evidence="32">
    <location>
        <begin position="4125"/>
        <end position="4127"/>
    </location>
</feature>
<feature type="strand" evidence="32">
    <location>
        <begin position="4131"/>
        <end position="4136"/>
    </location>
</feature>
<feature type="helix" evidence="32">
    <location>
        <begin position="4138"/>
        <end position="4140"/>
    </location>
</feature>
<feature type="strand" evidence="32">
    <location>
        <begin position="4145"/>
        <end position="4150"/>
    </location>
</feature>
<feature type="strand" evidence="32">
    <location>
        <begin position="4156"/>
        <end position="4161"/>
    </location>
</feature>
<feature type="turn" evidence="32">
    <location>
        <begin position="4162"/>
        <end position="4164"/>
    </location>
</feature>
<feature type="strand" evidence="32">
    <location>
        <begin position="4165"/>
        <end position="4170"/>
    </location>
</feature>
<feature type="helix" evidence="32">
    <location>
        <begin position="4173"/>
        <end position="4175"/>
    </location>
</feature>
<feature type="strand" evidence="32">
    <location>
        <begin position="4178"/>
        <end position="4181"/>
    </location>
</feature>
<feature type="strand" evidence="32">
    <location>
        <begin position="4185"/>
        <end position="4190"/>
    </location>
</feature>
<feature type="helix" evidence="32">
    <location>
        <begin position="4192"/>
        <end position="4194"/>
    </location>
</feature>
<feature type="strand" evidence="32">
    <location>
        <begin position="4199"/>
        <end position="4205"/>
    </location>
</feature>
<feature type="strand" evidence="32">
    <location>
        <begin position="4208"/>
        <end position="4213"/>
    </location>
</feature>
<feature type="strand" evidence="32">
    <location>
        <begin position="4218"/>
        <end position="4222"/>
    </location>
</feature>
<feature type="helix" evidence="32">
    <location>
        <begin position="4225"/>
        <end position="4227"/>
    </location>
</feature>
<feature type="strand" evidence="32">
    <location>
        <begin position="4231"/>
        <end position="4233"/>
    </location>
</feature>
<feature type="strand" evidence="32">
    <location>
        <begin position="4237"/>
        <end position="4242"/>
    </location>
</feature>
<feature type="helix" evidence="32">
    <location>
        <begin position="4244"/>
        <end position="4246"/>
    </location>
</feature>
<feature type="strand" evidence="32">
    <location>
        <begin position="4251"/>
        <end position="4256"/>
    </location>
</feature>
<feature type="strand" evidence="32">
    <location>
        <begin position="4258"/>
        <end position="4265"/>
    </location>
</feature>
<feature type="strand" evidence="32">
    <location>
        <begin position="4270"/>
        <end position="4274"/>
    </location>
</feature>
<feature type="strand" evidence="32">
    <location>
        <begin position="4283"/>
        <end position="4285"/>
    </location>
</feature>
<feature type="strand" evidence="32">
    <location>
        <begin position="4289"/>
        <end position="4294"/>
    </location>
</feature>
<feature type="helix" evidence="32">
    <location>
        <begin position="4296"/>
        <end position="4298"/>
    </location>
</feature>
<feature type="strand" evidence="32">
    <location>
        <begin position="4305"/>
        <end position="4309"/>
    </location>
</feature>
<feature type="strand" evidence="32">
    <location>
        <begin position="4312"/>
        <end position="4316"/>
    </location>
</feature>
<gene>
    <name evidence="23" type="primary">HERC2</name>
</gene>
<comment type="function">
    <text evidence="13 14 17 19 20">E3 ubiquitin-protein ligase that regulates ubiquitin-dependent retention of repair proteins on damaged chromosomes. Recruited to sites of DNA damage in response to ionizing radiation (IR) and facilitates the assembly of UBE2N and RNF8 promoting DNA damage-induced formation of 'Lys-63'-linked ubiquitin chains. Acts as a mediator of binding specificity between UBE2N and RNF8. Involved in the maintenance of RNF168 levels. E3 ubiquitin-protein ligase that promotes the ubiquitination and proteasomal degradation of XPA which influences the circadian oscillation of DNA excision repair activity. By controlling the steady-state expression of the IGF1R receptor, indirectly regulates the insulin-like growth factor receptor signaling pathway (PubMed:26692333). Also modulates iron metabolism by regulating the basal turnover of FBXL5 (PubMed:24778179).</text>
</comment>
<comment type="catalytic activity">
    <reaction evidence="14">
        <text>S-ubiquitinyl-[E2 ubiquitin-conjugating enzyme]-L-cysteine + [acceptor protein]-L-lysine = [E2 ubiquitin-conjugating enzyme]-L-cysteine + N(6)-ubiquitinyl-[acceptor protein]-L-lysine.</text>
        <dbReference type="EC" id="2.3.2.26"/>
    </reaction>
</comment>
<comment type="pathway">
    <text>Protein modification; protein ubiquitination.</text>
</comment>
<comment type="subunit">
    <text evidence="13 14 16 17">Interacts (when phosphorylated at Thr-4827 and sumoylated) with RNF8 (via FHA domain); this interaction increases after ionizing radiation (IR) treatment. Interacts with XPA. Interacts with NEURL4. Via its interaction with NEURL4, may indirectly interact with CCP110 and CEP97.</text>
</comment>
<comment type="interaction">
    <interactant intactId="EBI-1058922">
        <id>O95714</id>
    </interactant>
    <interactant intactId="EBI-529989">
        <id>Q9NRI5</id>
        <label>DISC1</label>
    </interactant>
    <organismsDiffer>false</organismsDiffer>
    <experiments>3</experiments>
</comment>
<comment type="interaction">
    <interactant intactId="EBI-1058922">
        <id>O95714</id>
    </interactant>
    <interactant intactId="EBI-2692340">
        <id>Q9UKA1</id>
        <label>FBXL5</label>
    </interactant>
    <organismsDiffer>false</organismsDiffer>
    <experiments>4</experiments>
</comment>
<comment type="interaction">
    <interactant intactId="EBI-1058922">
        <id>O95714</id>
    </interactant>
    <interactant intactId="EBI-8483734">
        <id>Q9BXG8</id>
        <label>SPZ1</label>
    </interactant>
    <organismsDiffer>false</organismsDiffer>
    <experiments>3</experiments>
</comment>
<comment type="interaction">
    <interactant intactId="EBI-1058922">
        <id>O95714</id>
    </interactant>
    <interactant intactId="EBI-10175863">
        <id>Q05086-2</id>
        <label>UBE3A</label>
    </interactant>
    <organismsDiffer>false</organismsDiffer>
    <experiments>5</experiments>
</comment>
<comment type="interaction">
    <interactant intactId="EBI-1058922">
        <id>O95714</id>
    </interactant>
    <interactant intactId="EBI-295222">
        <id>P23025</id>
        <label>XPA</label>
    </interactant>
    <organismsDiffer>false</organismsDiffer>
    <experiments>6</experiments>
</comment>
<comment type="subcellular location">
    <subcellularLocation>
        <location>Cytoplasm</location>
    </subcellularLocation>
    <subcellularLocation>
        <location>Cytoplasm</location>
        <location>Cytoskeleton</location>
        <location>Microtubule organizing center</location>
        <location>Centrosome</location>
        <location>Centriole</location>
    </subcellularLocation>
    <subcellularLocation>
        <location>Nucleus</location>
    </subcellularLocation>
    <text>Recruited to sites of DNA damage in response to ionizing radiation (IR) via its interaction with RNF8. May loose association with centrosomes during mitosis.</text>
</comment>
<comment type="domain">
    <text evidence="17">The ZZ-type zinc finger mediates binding to SUMO1, and at low level SUMO2.</text>
</comment>
<comment type="domain">
    <text evidence="17">The RCC1 repeats are grouped into three seven-bladed beta-propeller regions.</text>
</comment>
<comment type="PTM">
    <text evidence="13">Phosphorylation at Thr-4827 is required for interaction with RNF8.</text>
</comment>
<comment type="PTM">
    <text evidence="17">Sumoylated with SUMO1 by PIAS4 in response to double-strand breaks (DSBs), promoting the interaction with RNF8.</text>
</comment>
<comment type="polymorphism">
    <text evidence="10 11 12 15">Genetic variants in HERC2 define the skin/hair/eye pigmentation variation locus 1 (SHEP1) [MIM:227220]; also known as skin/hair/eye pigmentation type 1, blue/nonblue eyes or skin/hair/eye pigmentation type 1, blue/brown eyes or skin/hair/eye pigmentation type 1, blond/brown hair or eye color, brown/blue or eye color, blue/nonblue or eye color type 3 (EYCL3) or brown eye color type 2 (BEY2) or hair color type 3 (HCL3). Hair, eye and skin pigmentation are among the most visible examples of human phenotypic variation, with a broad normal range that is subject to substantial geographic stratification. In the case of skin, individuals tend to have lighter pigmentation with increasing distance from the equator. By contrast, the majority of variation in human eye and hair color is found among individuals of European ancestry, with most other human populations fixed for brown eyes and black hair. All blue-eyed individuals share a common haplotype, consisting of variants rs1129038 and rs12913832, independently on their origin (Denmark, Turkey or Jordan), suggesting a founder effect. This haplotype is located within HERC2 gene intron 86 and may be part of a regulatory element, which controls neighboring OCA2 gene expression (PubMed:18172690, PubMed:18252221, PubMed:18252222, PubMed:20457063). The blue eye-associated haplotype tends to silence OCA2 gene expression (PubMed:18172690). Other variants have also been statistically associated with eye color (PubMed:18252221, PubMed:18252222, PubMed:20457063).</text>
</comment>
<comment type="disease" evidence="18">
    <disease id="DI-03939">
        <name>Intellectual developmental disorder, autosomal recessive 38</name>
        <acronym>MRT38</acronym>
        <description>A disorder characterized by significantly below average general intellectual functioning associated with impairments in adaptive behavior and manifested during the developmental period. MRT38 is characterized by global developmental delay affecting motor, speech, adaptive, and social development. Patients manifest autistic features, aggression, self-injury, impulsivity, and distractibility.</description>
        <dbReference type="MIM" id="615516"/>
    </disease>
    <text>The disease is caused by variants affecting the gene represented in this entry.</text>
</comment>
<comment type="online information" name="Hect domain and RLD 2 (HERC2)">
    <link uri="https://databases.lovd.nl/shared/genes/HERC2"/>
    <text>Leiden Open Variation Database (LOVD)</text>
</comment>
<protein>
    <recommendedName>
        <fullName>E3 ubiquitin-protein ligase HERC2</fullName>
        <ecNumber evidence="14">2.3.2.26</ecNumber>
    </recommendedName>
    <alternativeName>
        <fullName>HECT domain and RCC1-like domain-containing protein 2</fullName>
    </alternativeName>
    <alternativeName>
        <fullName>HECT-type E3 ubiquitin transferase HERC2</fullName>
    </alternativeName>
</protein>
<name>HERC2_HUMAN</name>